<dbReference type="EC" id="2.7.11.1" evidence="13 23 33 35 37 38 49"/>
<dbReference type="EMBL" id="AF191838">
    <property type="protein sequence ID" value="AAF05989.1"/>
    <property type="molecule type" value="mRNA"/>
</dbReference>
<dbReference type="EMBL" id="AF174536">
    <property type="protein sequence ID" value="AAF69106.1"/>
    <property type="molecule type" value="mRNA"/>
</dbReference>
<dbReference type="EMBL" id="AK002192">
    <property type="protein sequence ID" value="BAA92129.1"/>
    <property type="status" value="ALT_INIT"/>
    <property type="molecule type" value="mRNA"/>
</dbReference>
<dbReference type="EMBL" id="AK291039">
    <property type="protein sequence ID" value="BAF83728.1"/>
    <property type="molecule type" value="mRNA"/>
</dbReference>
<dbReference type="EMBL" id="CH471054">
    <property type="protein sequence ID" value="EAW97133.1"/>
    <property type="molecule type" value="Genomic_DNA"/>
</dbReference>
<dbReference type="EMBL" id="BC034950">
    <property type="protein sequence ID" value="AAH34950.1"/>
    <property type="molecule type" value="mRNA"/>
</dbReference>
<dbReference type="CCDS" id="CCDS8968.1"/>
<dbReference type="RefSeq" id="NP_037386.1">
    <property type="nucleotide sequence ID" value="NM_013254.4"/>
</dbReference>
<dbReference type="RefSeq" id="XP_005268866.1">
    <property type="nucleotide sequence ID" value="XM_005268809.2"/>
</dbReference>
<dbReference type="RefSeq" id="XP_005268867.1">
    <property type="nucleotide sequence ID" value="XM_005268810.2"/>
</dbReference>
<dbReference type="RefSeq" id="XP_054227832.1">
    <property type="nucleotide sequence ID" value="XM_054371857.1"/>
</dbReference>
<dbReference type="RefSeq" id="XP_054227833.1">
    <property type="nucleotide sequence ID" value="XM_054371858.1"/>
</dbReference>
<dbReference type="PDB" id="4EFO">
    <property type="method" value="X-ray"/>
    <property type="resolution" value="1.77 A"/>
    <property type="chains" value="A/B=302-383"/>
</dbReference>
<dbReference type="PDB" id="4EUT">
    <property type="method" value="X-ray"/>
    <property type="resolution" value="2.60 A"/>
    <property type="chains" value="A/B=2-385"/>
</dbReference>
<dbReference type="PDB" id="4EUU">
    <property type="method" value="X-ray"/>
    <property type="resolution" value="1.80 A"/>
    <property type="chains" value="A/B=2-308"/>
</dbReference>
<dbReference type="PDB" id="4IM0">
    <property type="method" value="X-ray"/>
    <property type="resolution" value="2.40 A"/>
    <property type="chains" value="A=1-657"/>
</dbReference>
<dbReference type="PDB" id="4IM2">
    <property type="method" value="X-ray"/>
    <property type="resolution" value="2.50 A"/>
    <property type="chains" value="A=1-657"/>
</dbReference>
<dbReference type="PDB" id="4IM3">
    <property type="method" value="X-ray"/>
    <property type="resolution" value="3.34 A"/>
    <property type="chains" value="A=1-657"/>
</dbReference>
<dbReference type="PDB" id="4IW0">
    <property type="method" value="X-ray"/>
    <property type="resolution" value="4.00 A"/>
    <property type="chains" value="A=2-657"/>
</dbReference>
<dbReference type="PDB" id="4IWO">
    <property type="method" value="X-ray"/>
    <property type="resolution" value="2.61 A"/>
    <property type="chains" value="A=2-657"/>
</dbReference>
<dbReference type="PDB" id="4IWP">
    <property type="method" value="X-ray"/>
    <property type="resolution" value="3.06 A"/>
    <property type="chains" value="A=2-657"/>
</dbReference>
<dbReference type="PDB" id="4IWQ">
    <property type="method" value="X-ray"/>
    <property type="resolution" value="3.00 A"/>
    <property type="chains" value="A=2-657"/>
</dbReference>
<dbReference type="PDB" id="5EOA">
    <property type="method" value="X-ray"/>
    <property type="resolution" value="2.50 A"/>
    <property type="chains" value="C/D=677-729"/>
</dbReference>
<dbReference type="PDB" id="5EOF">
    <property type="method" value="X-ray"/>
    <property type="resolution" value="2.05 A"/>
    <property type="chains" value="C/D=677-729"/>
</dbReference>
<dbReference type="PDB" id="5EP6">
    <property type="method" value="X-ray"/>
    <property type="resolution" value="1.45 A"/>
    <property type="chains" value="B/D=677-729"/>
</dbReference>
<dbReference type="PDB" id="5W5V">
    <property type="method" value="X-ray"/>
    <property type="resolution" value="3.65 A"/>
    <property type="chains" value="A=1-657"/>
</dbReference>
<dbReference type="PDB" id="6BNY">
    <property type="method" value="X-ray"/>
    <property type="resolution" value="3.34 A"/>
    <property type="chains" value="A=1-657"/>
</dbReference>
<dbReference type="PDB" id="6BOD">
    <property type="method" value="X-ray"/>
    <property type="resolution" value="3.20 A"/>
    <property type="chains" value="A=1-657"/>
</dbReference>
<dbReference type="PDB" id="6BOE">
    <property type="method" value="X-ray"/>
    <property type="resolution" value="3.60 A"/>
    <property type="chains" value="A=1-657"/>
</dbReference>
<dbReference type="PDB" id="6CQ0">
    <property type="method" value="X-ray"/>
    <property type="resolution" value="3.19 A"/>
    <property type="chains" value="A=1-657"/>
</dbReference>
<dbReference type="PDB" id="6CQ4">
    <property type="method" value="X-ray"/>
    <property type="resolution" value="3.20 A"/>
    <property type="chains" value="A=1-657"/>
</dbReference>
<dbReference type="PDB" id="6CQ5">
    <property type="method" value="X-ray"/>
    <property type="resolution" value="3.35 A"/>
    <property type="chains" value="A=1-657"/>
</dbReference>
<dbReference type="PDB" id="6NT9">
    <property type="method" value="EM"/>
    <property type="resolution" value="3.30 A"/>
    <property type="chains" value="A/B=1-729"/>
</dbReference>
<dbReference type="PDB" id="6O8B">
    <property type="method" value="X-ray"/>
    <property type="resolution" value="3.40 A"/>
    <property type="chains" value="A/B=2-657"/>
</dbReference>
<dbReference type="PDB" id="6RSR">
    <property type="method" value="X-ray"/>
    <property type="resolution" value="3.15 A"/>
    <property type="chains" value="A=2-657"/>
</dbReference>
<dbReference type="PDB" id="6RST">
    <property type="method" value="X-ray"/>
    <property type="resolution" value="3.29 A"/>
    <property type="chains" value="A=2-657"/>
</dbReference>
<dbReference type="PDB" id="6RSU">
    <property type="method" value="X-ray"/>
    <property type="resolution" value="2.75 A"/>
    <property type="chains" value="A=2-657"/>
</dbReference>
<dbReference type="PDBsum" id="4EFO"/>
<dbReference type="PDBsum" id="4EUT"/>
<dbReference type="PDBsum" id="4EUU"/>
<dbReference type="PDBsum" id="4IM0"/>
<dbReference type="PDBsum" id="4IM2"/>
<dbReference type="PDBsum" id="4IM3"/>
<dbReference type="PDBsum" id="4IW0"/>
<dbReference type="PDBsum" id="4IWO"/>
<dbReference type="PDBsum" id="4IWP"/>
<dbReference type="PDBsum" id="4IWQ"/>
<dbReference type="PDBsum" id="5EOA"/>
<dbReference type="PDBsum" id="5EOF"/>
<dbReference type="PDBsum" id="5EP6"/>
<dbReference type="PDBsum" id="5W5V"/>
<dbReference type="PDBsum" id="6BNY"/>
<dbReference type="PDBsum" id="6BOD"/>
<dbReference type="PDBsum" id="6BOE"/>
<dbReference type="PDBsum" id="6CQ0"/>
<dbReference type="PDBsum" id="6CQ4"/>
<dbReference type="PDBsum" id="6CQ5"/>
<dbReference type="PDBsum" id="6NT9"/>
<dbReference type="PDBsum" id="6O8B"/>
<dbReference type="PDBsum" id="6RSR"/>
<dbReference type="PDBsum" id="6RST"/>
<dbReference type="PDBsum" id="6RSU"/>
<dbReference type="EMDB" id="EMD-0506"/>
<dbReference type="SMR" id="Q9UHD2"/>
<dbReference type="BioGRID" id="118878">
    <property type="interactions" value="423"/>
</dbReference>
<dbReference type="ComplexPortal" id="CPX-6018">
    <property type="entry name" value="STING-TRAF3-TBK1 complex"/>
</dbReference>
<dbReference type="ComplexPortal" id="CPX-6038">
    <property type="entry name" value="TBK1-IKKepsilon-NAP1 complex"/>
</dbReference>
<dbReference type="ComplexPortal" id="CPX-6089">
    <property type="entry name" value="TBK1-IKKepsilon-TANK complex"/>
</dbReference>
<dbReference type="ComplexPortal" id="CPX-6090">
    <property type="entry name" value="TBK1-IKKepsilon-SINTBAD complex"/>
</dbReference>
<dbReference type="CORUM" id="Q9UHD2"/>
<dbReference type="DIP" id="DIP-27529N"/>
<dbReference type="FunCoup" id="Q9UHD2">
    <property type="interactions" value="4748"/>
</dbReference>
<dbReference type="IntAct" id="Q9UHD2">
    <property type="interactions" value="159"/>
</dbReference>
<dbReference type="MINT" id="Q9UHD2"/>
<dbReference type="STRING" id="9606.ENSP00000329967"/>
<dbReference type="BindingDB" id="Q9UHD2"/>
<dbReference type="ChEMBL" id="CHEMBL5408"/>
<dbReference type="DrugBank" id="DB12010">
    <property type="generic name" value="Fostamatinib"/>
</dbReference>
<dbReference type="DrugCentral" id="Q9UHD2"/>
<dbReference type="GuidetoPHARMACOLOGY" id="2237"/>
<dbReference type="GlyGen" id="Q9UHD2">
    <property type="glycosylation" value="1 site, 1 N-linked glycan (1 site)"/>
</dbReference>
<dbReference type="iPTMnet" id="Q9UHD2"/>
<dbReference type="MetOSite" id="Q9UHD2"/>
<dbReference type="PhosphoSitePlus" id="Q9UHD2"/>
<dbReference type="BioMuta" id="TBK1"/>
<dbReference type="DMDM" id="74761953"/>
<dbReference type="CPTAC" id="CPTAC-2972"/>
<dbReference type="CPTAC" id="CPTAC-2973"/>
<dbReference type="CPTAC" id="CPTAC-910"/>
<dbReference type="CPTAC" id="CPTAC-911"/>
<dbReference type="jPOST" id="Q9UHD2"/>
<dbReference type="MassIVE" id="Q9UHD2"/>
<dbReference type="PaxDb" id="9606-ENSP00000329967"/>
<dbReference type="PeptideAtlas" id="Q9UHD2"/>
<dbReference type="ProteomicsDB" id="84323"/>
<dbReference type="Pumba" id="Q9UHD2"/>
<dbReference type="Antibodypedia" id="16584">
    <property type="antibodies" value="625 antibodies from 45 providers"/>
</dbReference>
<dbReference type="DNASU" id="29110"/>
<dbReference type="YCharOS" id="Q9UHD2">
    <property type="antibodies" value="Tested 11 antibodies from 6 manufacturers"/>
</dbReference>
<dbReference type="Ensembl" id="ENST00000331710.10">
    <property type="protein sequence ID" value="ENSP00000329967.5"/>
    <property type="gene ID" value="ENSG00000183735.11"/>
</dbReference>
<dbReference type="Ensembl" id="ENST00000650790.1">
    <property type="protein sequence ID" value="ENSP00000498995.1"/>
    <property type="gene ID" value="ENSG00000183735.11"/>
</dbReference>
<dbReference type="GeneID" id="29110"/>
<dbReference type="KEGG" id="hsa:29110"/>
<dbReference type="MANE-Select" id="ENST00000331710.10">
    <property type="protein sequence ID" value="ENSP00000329967.5"/>
    <property type="RefSeq nucleotide sequence ID" value="NM_013254.4"/>
    <property type="RefSeq protein sequence ID" value="NP_037386.1"/>
</dbReference>
<dbReference type="UCSC" id="uc001ssc.3">
    <property type="organism name" value="human"/>
</dbReference>
<dbReference type="AGR" id="HGNC:11584"/>
<dbReference type="CTD" id="29110"/>
<dbReference type="DisGeNET" id="29110"/>
<dbReference type="GeneCards" id="TBK1"/>
<dbReference type="HGNC" id="HGNC:11584">
    <property type="gene designation" value="TBK1"/>
</dbReference>
<dbReference type="HPA" id="ENSG00000183735">
    <property type="expression patterns" value="Low tissue specificity"/>
</dbReference>
<dbReference type="MalaCards" id="TBK1"/>
<dbReference type="MIM" id="177700">
    <property type="type" value="phenotype"/>
</dbReference>
<dbReference type="MIM" id="604834">
    <property type="type" value="gene"/>
</dbReference>
<dbReference type="MIM" id="616439">
    <property type="type" value="phenotype"/>
</dbReference>
<dbReference type="MIM" id="617900">
    <property type="type" value="phenotype"/>
</dbReference>
<dbReference type="MIM" id="620880">
    <property type="type" value="phenotype"/>
</dbReference>
<dbReference type="neXtProt" id="NX_Q9UHD2"/>
<dbReference type="OpenTargets" id="ENSG00000183735"/>
<dbReference type="Orphanet" id="803">
    <property type="disease" value="Amyotrophic lateral sclerosis"/>
</dbReference>
<dbReference type="Orphanet" id="275872">
    <property type="disease" value="Frontotemporal dementia with motor neuron disease"/>
</dbReference>
<dbReference type="Orphanet" id="1930">
    <property type="disease" value="Herpes simplex virus encephalitis"/>
</dbReference>
<dbReference type="PharmGKB" id="PA36348"/>
<dbReference type="VEuPathDB" id="HostDB:ENSG00000183735"/>
<dbReference type="eggNOG" id="KOG4250">
    <property type="taxonomic scope" value="Eukaryota"/>
</dbReference>
<dbReference type="GeneTree" id="ENSGT00950000182937"/>
<dbReference type="HOGENOM" id="CLU_000288_101_1_1"/>
<dbReference type="InParanoid" id="Q9UHD2"/>
<dbReference type="OMA" id="WSADMPV"/>
<dbReference type="OrthoDB" id="10013850at2759"/>
<dbReference type="PAN-GO" id="Q9UHD2">
    <property type="GO annotations" value="3 GO annotations based on evolutionary models"/>
</dbReference>
<dbReference type="PhylomeDB" id="Q9UHD2"/>
<dbReference type="TreeFam" id="TF324269"/>
<dbReference type="PathwayCommons" id="Q9UHD2"/>
<dbReference type="Reactome" id="R-HSA-1606341">
    <property type="pathway name" value="IRF3 mediated activation of type 1 IFN"/>
</dbReference>
<dbReference type="Reactome" id="R-HSA-168928">
    <property type="pathway name" value="DDX58/IFIH1-mediated induction of interferon-alpha/beta"/>
</dbReference>
<dbReference type="Reactome" id="R-HSA-3134975">
    <property type="pathway name" value="Regulation of innate immune responses to cytosolic DNA"/>
</dbReference>
<dbReference type="Reactome" id="R-HSA-3249367">
    <property type="pathway name" value="STAT6-mediated induction of chemokines"/>
</dbReference>
<dbReference type="Reactome" id="R-HSA-3270619">
    <property type="pathway name" value="IRF3-mediated induction of type I IFN"/>
</dbReference>
<dbReference type="Reactome" id="R-HSA-5205685">
    <property type="pathway name" value="PINK1-PRKN Mediated Mitophagy"/>
</dbReference>
<dbReference type="Reactome" id="R-HSA-5357786">
    <property type="pathway name" value="TNFR1-induced proapoptotic signaling"/>
</dbReference>
<dbReference type="Reactome" id="R-HSA-5357905">
    <property type="pathway name" value="Regulation of TNFR1 signaling"/>
</dbReference>
<dbReference type="Reactome" id="R-HSA-9008059">
    <property type="pathway name" value="Interleukin-37 signaling"/>
</dbReference>
<dbReference type="Reactome" id="R-HSA-9013973">
    <property type="pathway name" value="TICAM1-dependent activation of IRF3/IRF7"/>
</dbReference>
<dbReference type="Reactome" id="R-HSA-918233">
    <property type="pathway name" value="TRAF3-dependent IRF activation pathway"/>
</dbReference>
<dbReference type="Reactome" id="R-HSA-933541">
    <property type="pathway name" value="TRAF6 mediated IRF7 activation"/>
</dbReference>
<dbReference type="Reactome" id="R-HSA-936440">
    <property type="pathway name" value="Negative regulators of DDX58/IFIH1 signaling"/>
</dbReference>
<dbReference type="Reactome" id="R-HSA-936964">
    <property type="pathway name" value="Activation of IRF3, IRF7 mediated by TBK1, IKKEpsilon (IKBKE)"/>
</dbReference>
<dbReference type="Reactome" id="R-HSA-9679191">
    <property type="pathway name" value="Potential therapeutics for SARS"/>
</dbReference>
<dbReference type="Reactome" id="R-HSA-9692916">
    <property type="pathway name" value="SARS-CoV-1 activates/modulates innate immune responses"/>
</dbReference>
<dbReference type="Reactome" id="R-HSA-9705671">
    <property type="pathway name" value="SARS-CoV-2 activates/modulates innate and adaptive immune responses"/>
</dbReference>
<dbReference type="Reactome" id="R-HSA-9824878">
    <property type="pathway name" value="Regulation of TBK1, IKKEpsilon (IKBKE)-mediated activation of IRF3, IRF7"/>
</dbReference>
<dbReference type="Reactome" id="R-HSA-9828211">
    <property type="pathway name" value="Regulation of TBK1, IKKEpsilon-mediated activation of IRF3, IRF7 upon TLR3 ligation"/>
</dbReference>
<dbReference type="SABIO-RK" id="Q9UHD2"/>
<dbReference type="SignaLink" id="Q9UHD2"/>
<dbReference type="SIGNOR" id="Q9UHD2"/>
<dbReference type="BioGRID-ORCS" id="29110">
    <property type="hits" value="34 hits in 1203 CRISPR screens"/>
</dbReference>
<dbReference type="CD-CODE" id="7F558BCC">
    <property type="entry name" value="STING phase-separator"/>
</dbReference>
<dbReference type="CD-CODE" id="FB4E32DD">
    <property type="entry name" value="Presynaptic clusters and postsynaptic densities"/>
</dbReference>
<dbReference type="ChiTaRS" id="TBK1">
    <property type="organism name" value="human"/>
</dbReference>
<dbReference type="EvolutionaryTrace" id="Q9UHD2"/>
<dbReference type="GeneWiki" id="TANK-binding_kinase_1"/>
<dbReference type="GenomeRNAi" id="29110"/>
<dbReference type="Pharos" id="Q9UHD2">
    <property type="development level" value="Tchem"/>
</dbReference>
<dbReference type="PRO" id="PR:Q9UHD2"/>
<dbReference type="Proteomes" id="UP000005640">
    <property type="component" value="Chromosome 12"/>
</dbReference>
<dbReference type="RNAct" id="Q9UHD2">
    <property type="molecule type" value="protein"/>
</dbReference>
<dbReference type="Bgee" id="ENSG00000183735">
    <property type="expression patterns" value="Expressed in colonic epithelium and 198 other cell types or tissues"/>
</dbReference>
<dbReference type="ExpressionAtlas" id="Q9UHD2">
    <property type="expression patterns" value="baseline and differential"/>
</dbReference>
<dbReference type="GO" id="GO:0005737">
    <property type="term" value="C:cytoplasm"/>
    <property type="evidence" value="ECO:0000314"/>
    <property type="project" value="UniProtKB"/>
</dbReference>
<dbReference type="GO" id="GO:0005829">
    <property type="term" value="C:cytosol"/>
    <property type="evidence" value="ECO:0000314"/>
    <property type="project" value="UniProt"/>
</dbReference>
<dbReference type="GO" id="GO:0043231">
    <property type="term" value="C:intracellular membrane-bounded organelle"/>
    <property type="evidence" value="ECO:0000314"/>
    <property type="project" value="HPA"/>
</dbReference>
<dbReference type="GO" id="GO:0005654">
    <property type="term" value="C:nucleoplasm"/>
    <property type="evidence" value="ECO:0000314"/>
    <property type="project" value="HPA"/>
</dbReference>
<dbReference type="GO" id="GO:1902554">
    <property type="term" value="C:serine/threonine protein kinase complex"/>
    <property type="evidence" value="ECO:0000303"/>
    <property type="project" value="ComplexPortal"/>
</dbReference>
<dbReference type="GO" id="GO:0005524">
    <property type="term" value="F:ATP binding"/>
    <property type="evidence" value="ECO:0007669"/>
    <property type="project" value="UniProtKB-KW"/>
</dbReference>
<dbReference type="GO" id="GO:0042802">
    <property type="term" value="F:identical protein binding"/>
    <property type="evidence" value="ECO:0007669"/>
    <property type="project" value="Ensembl"/>
</dbReference>
<dbReference type="GO" id="GO:0003676">
    <property type="term" value="F:nucleic acid binding"/>
    <property type="evidence" value="ECO:0007669"/>
    <property type="project" value="Ensembl"/>
</dbReference>
<dbReference type="GO" id="GO:0051219">
    <property type="term" value="F:phosphoprotein binding"/>
    <property type="evidence" value="ECO:0000353"/>
    <property type="project" value="UniProtKB"/>
</dbReference>
<dbReference type="GO" id="GO:0004672">
    <property type="term" value="F:protein kinase activity"/>
    <property type="evidence" value="ECO:0000303"/>
    <property type="project" value="ProtInc"/>
</dbReference>
<dbReference type="GO" id="GO:0019903">
    <property type="term" value="F:protein phosphatase binding"/>
    <property type="evidence" value="ECO:0000250"/>
    <property type="project" value="ARUK-UCL"/>
</dbReference>
<dbReference type="GO" id="GO:0106310">
    <property type="term" value="F:protein serine kinase activity"/>
    <property type="evidence" value="ECO:0000314"/>
    <property type="project" value="BHF-UCL"/>
</dbReference>
<dbReference type="GO" id="GO:0004674">
    <property type="term" value="F:protein serine/threonine kinase activity"/>
    <property type="evidence" value="ECO:0000314"/>
    <property type="project" value="UniProtKB"/>
</dbReference>
<dbReference type="GO" id="GO:0061629">
    <property type="term" value="F:RNA polymerase II-specific DNA-binding transcription factor binding"/>
    <property type="evidence" value="ECO:0000353"/>
    <property type="project" value="BHF-UCL"/>
</dbReference>
<dbReference type="GO" id="GO:0002218">
    <property type="term" value="P:activation of innate immune response"/>
    <property type="evidence" value="ECO:0000314"/>
    <property type="project" value="UniProt"/>
</dbReference>
<dbReference type="GO" id="GO:0140374">
    <property type="term" value="P:antiviral innate immune response"/>
    <property type="evidence" value="ECO:0000314"/>
    <property type="project" value="UniProt"/>
</dbReference>
<dbReference type="GO" id="GO:0007249">
    <property type="term" value="P:canonical NF-kappaB signal transduction"/>
    <property type="evidence" value="ECO:0000304"/>
    <property type="project" value="UniProtKB"/>
</dbReference>
<dbReference type="GO" id="GO:0140896">
    <property type="term" value="P:cGAS/STING signaling pathway"/>
    <property type="evidence" value="ECO:0000304"/>
    <property type="project" value="FlyBase"/>
</dbReference>
<dbReference type="GO" id="GO:0002753">
    <property type="term" value="P:cytoplasmic pattern recognition receptor signaling pathway"/>
    <property type="evidence" value="ECO:0000314"/>
    <property type="project" value="UniProt"/>
</dbReference>
<dbReference type="GO" id="GO:0050830">
    <property type="term" value="P:defense response to Gram-positive bacterium"/>
    <property type="evidence" value="ECO:0007669"/>
    <property type="project" value="Ensembl"/>
</dbReference>
<dbReference type="GO" id="GO:0051607">
    <property type="term" value="P:defense response to virus"/>
    <property type="evidence" value="ECO:0000303"/>
    <property type="project" value="ComplexPortal"/>
</dbReference>
<dbReference type="GO" id="GO:0044565">
    <property type="term" value="P:dendritic cell proliferation"/>
    <property type="evidence" value="ECO:0007669"/>
    <property type="project" value="Ensembl"/>
</dbReference>
<dbReference type="GO" id="GO:0006954">
    <property type="term" value="P:inflammatory response"/>
    <property type="evidence" value="ECO:0000304"/>
    <property type="project" value="UniProtKB"/>
</dbReference>
<dbReference type="GO" id="GO:0045087">
    <property type="term" value="P:innate immune response"/>
    <property type="evidence" value="ECO:0000314"/>
    <property type="project" value="UniProtKB"/>
</dbReference>
<dbReference type="GO" id="GO:0016236">
    <property type="term" value="P:macroautophagy"/>
    <property type="evidence" value="ECO:0000304"/>
    <property type="project" value="Reactome"/>
</dbReference>
<dbReference type="GO" id="GO:0010629">
    <property type="term" value="P:negative regulation of gene expression"/>
    <property type="evidence" value="ECO:0007669"/>
    <property type="project" value="Ensembl"/>
</dbReference>
<dbReference type="GO" id="GO:1904262">
    <property type="term" value="P:negative regulation of TORC1 signaling"/>
    <property type="evidence" value="ECO:0000314"/>
    <property type="project" value="UniProtKB"/>
</dbReference>
<dbReference type="GO" id="GO:0018105">
    <property type="term" value="P:peptidyl-serine phosphorylation"/>
    <property type="evidence" value="ECO:0000314"/>
    <property type="project" value="UniProtKB"/>
</dbReference>
<dbReference type="GO" id="GO:0018107">
    <property type="term" value="P:peptidyl-threonine phosphorylation"/>
    <property type="evidence" value="ECO:0000314"/>
    <property type="project" value="UniProtKB"/>
</dbReference>
<dbReference type="GO" id="GO:0010508">
    <property type="term" value="P:positive regulation of autophagy"/>
    <property type="evidence" value="ECO:0000314"/>
    <property type="project" value="UniProt"/>
</dbReference>
<dbReference type="GO" id="GO:0043123">
    <property type="term" value="P:positive regulation of canonical NF-kappaB signal transduction"/>
    <property type="evidence" value="ECO:0000270"/>
    <property type="project" value="UniProtKB"/>
</dbReference>
<dbReference type="GO" id="GO:0032727">
    <property type="term" value="P:positive regulation of interferon-alpha production"/>
    <property type="evidence" value="ECO:0000314"/>
    <property type="project" value="BHF-UCL"/>
</dbReference>
<dbReference type="GO" id="GO:0032728">
    <property type="term" value="P:positive regulation of interferon-beta production"/>
    <property type="evidence" value="ECO:0000314"/>
    <property type="project" value="BHF-UCL"/>
</dbReference>
<dbReference type="GO" id="GO:0016239">
    <property type="term" value="P:positive regulation of macroautophagy"/>
    <property type="evidence" value="ECO:0000314"/>
    <property type="project" value="HGNC"/>
</dbReference>
<dbReference type="GO" id="GO:1904263">
    <property type="term" value="P:positive regulation of TORC1 signaling"/>
    <property type="evidence" value="ECO:0000314"/>
    <property type="project" value="UniProtKB"/>
</dbReference>
<dbReference type="GO" id="GO:1904515">
    <property type="term" value="P:positive regulation of TORC2 signaling"/>
    <property type="evidence" value="ECO:0000250"/>
    <property type="project" value="UniProtKB"/>
</dbReference>
<dbReference type="GO" id="GO:0045944">
    <property type="term" value="P:positive regulation of transcription by RNA polymerase II"/>
    <property type="evidence" value="ECO:0000314"/>
    <property type="project" value="BHF-UCL"/>
</dbReference>
<dbReference type="GO" id="GO:0032481">
    <property type="term" value="P:positive regulation of type I interferon production"/>
    <property type="evidence" value="ECO:0000314"/>
    <property type="project" value="UniProt"/>
</dbReference>
<dbReference type="GO" id="GO:0060340">
    <property type="term" value="P:positive regulation of type I interferon-mediated signaling pathway"/>
    <property type="evidence" value="ECO:0007669"/>
    <property type="project" value="Ensembl"/>
</dbReference>
<dbReference type="GO" id="GO:1904417">
    <property type="term" value="P:positive regulation of xenophagy"/>
    <property type="evidence" value="ECO:0007669"/>
    <property type="project" value="Ensembl"/>
</dbReference>
<dbReference type="GO" id="GO:0006468">
    <property type="term" value="P:protein phosphorylation"/>
    <property type="evidence" value="ECO:0000314"/>
    <property type="project" value="UniProtKB"/>
</dbReference>
<dbReference type="GO" id="GO:0032479">
    <property type="term" value="P:regulation of type I interferon production"/>
    <property type="evidence" value="ECO:0000314"/>
    <property type="project" value="UniProtKB"/>
</dbReference>
<dbReference type="GO" id="GO:0009615">
    <property type="term" value="P:response to virus"/>
    <property type="evidence" value="ECO:0000304"/>
    <property type="project" value="UniProtKB"/>
</dbReference>
<dbReference type="GO" id="GO:0061470">
    <property type="term" value="P:T follicular helper cell differentiation"/>
    <property type="evidence" value="ECO:0000314"/>
    <property type="project" value="UniProt"/>
</dbReference>
<dbReference type="GO" id="GO:0034142">
    <property type="term" value="P:toll-like receptor 4 signaling pathway"/>
    <property type="evidence" value="ECO:0000314"/>
    <property type="project" value="UniProt"/>
</dbReference>
<dbReference type="GO" id="GO:0060337">
    <property type="term" value="P:type I interferon-mediated signaling pathway"/>
    <property type="evidence" value="ECO:0000303"/>
    <property type="project" value="ComplexPortal"/>
</dbReference>
<dbReference type="CDD" id="cd13988">
    <property type="entry name" value="STKc_TBK1"/>
    <property type="match status" value="1"/>
</dbReference>
<dbReference type="CDD" id="cd21954">
    <property type="entry name" value="TBK1_C"/>
    <property type="match status" value="1"/>
</dbReference>
<dbReference type="CDD" id="cd17127">
    <property type="entry name" value="Ubl_TBK1"/>
    <property type="match status" value="1"/>
</dbReference>
<dbReference type="FunFam" id="1.10.510.10:FF:000100">
    <property type="entry name" value="inhibitor of nuclear factor kappa-B kinase subunit epsilon"/>
    <property type="match status" value="1"/>
</dbReference>
<dbReference type="FunFam" id="1.20.1270.420:FF:000001">
    <property type="entry name" value="Serine/threonine-protein kinase TBK1"/>
    <property type="match status" value="1"/>
</dbReference>
<dbReference type="FunFam" id="3.30.200.20:FF:000106">
    <property type="entry name" value="serine/threonine-protein kinase TBK1 isoform X1"/>
    <property type="match status" value="1"/>
</dbReference>
<dbReference type="FunFam" id="3.10.20.90:FF:000112">
    <property type="entry name" value="TANK binding kinase TBK1"/>
    <property type="match status" value="1"/>
</dbReference>
<dbReference type="Gene3D" id="1.20.1270.420">
    <property type="match status" value="1"/>
</dbReference>
<dbReference type="Gene3D" id="3.10.20.90">
    <property type="entry name" value="Phosphatidylinositol 3-kinase Catalytic Subunit, Chain A, domain 1"/>
    <property type="match status" value="1"/>
</dbReference>
<dbReference type="Gene3D" id="3.30.200.20">
    <property type="entry name" value="Phosphorylase Kinase, domain 1"/>
    <property type="match status" value="1"/>
</dbReference>
<dbReference type="Gene3D" id="1.10.510.10">
    <property type="entry name" value="Transferase(Phosphotransferase) domain 1"/>
    <property type="match status" value="1"/>
</dbReference>
<dbReference type="InterPro" id="IPR051180">
    <property type="entry name" value="IKK"/>
</dbReference>
<dbReference type="InterPro" id="IPR011009">
    <property type="entry name" value="Kinase-like_dom_sf"/>
</dbReference>
<dbReference type="InterPro" id="IPR000719">
    <property type="entry name" value="Prot_kinase_dom"/>
</dbReference>
<dbReference type="InterPro" id="IPR017441">
    <property type="entry name" value="Protein_kinase_ATP_BS"/>
</dbReference>
<dbReference type="InterPro" id="IPR041309">
    <property type="entry name" value="TBK1_CCD1"/>
</dbReference>
<dbReference type="InterPro" id="IPR041087">
    <property type="entry name" value="TBK1_ULD"/>
</dbReference>
<dbReference type="PANTHER" id="PTHR22969">
    <property type="entry name" value="IKB KINASE"/>
    <property type="match status" value="1"/>
</dbReference>
<dbReference type="PANTHER" id="PTHR22969:SF14">
    <property type="entry name" value="SERINE_THREONINE-PROTEIN KINASE TBK1"/>
    <property type="match status" value="1"/>
</dbReference>
<dbReference type="Pfam" id="PF00069">
    <property type="entry name" value="Pkinase"/>
    <property type="match status" value="1"/>
</dbReference>
<dbReference type="Pfam" id="PF18394">
    <property type="entry name" value="TBK1_CCD1"/>
    <property type="match status" value="1"/>
</dbReference>
<dbReference type="Pfam" id="PF18396">
    <property type="entry name" value="TBK1_ULD"/>
    <property type="match status" value="1"/>
</dbReference>
<dbReference type="SMART" id="SM00220">
    <property type="entry name" value="S_TKc"/>
    <property type="match status" value="1"/>
</dbReference>
<dbReference type="SUPFAM" id="SSF56112">
    <property type="entry name" value="Protein kinase-like (PK-like)"/>
    <property type="match status" value="1"/>
</dbReference>
<dbReference type="PROSITE" id="PS00107">
    <property type="entry name" value="PROTEIN_KINASE_ATP"/>
    <property type="match status" value="1"/>
</dbReference>
<dbReference type="PROSITE" id="PS50011">
    <property type="entry name" value="PROTEIN_KINASE_DOM"/>
    <property type="match status" value="1"/>
</dbReference>
<evidence type="ECO:0000250" key="1">
    <source>
        <dbReference type="UniProtKB" id="Q9WUN2"/>
    </source>
</evidence>
<evidence type="ECO:0000255" key="2"/>
<evidence type="ECO:0000255" key="3">
    <source>
        <dbReference type="PROSITE-ProRule" id="PRU00159"/>
    </source>
</evidence>
<evidence type="ECO:0000269" key="4">
    <source>
    </source>
</evidence>
<evidence type="ECO:0000269" key="5">
    <source>
    </source>
</evidence>
<evidence type="ECO:0000269" key="6">
    <source>
    </source>
</evidence>
<evidence type="ECO:0000269" key="7">
    <source>
    </source>
</evidence>
<evidence type="ECO:0000269" key="8">
    <source>
    </source>
</evidence>
<evidence type="ECO:0000269" key="9">
    <source>
    </source>
</evidence>
<evidence type="ECO:0000269" key="10">
    <source>
    </source>
</evidence>
<evidence type="ECO:0000269" key="11">
    <source>
    </source>
</evidence>
<evidence type="ECO:0000269" key="12">
    <source>
    </source>
</evidence>
<evidence type="ECO:0000269" key="13">
    <source>
    </source>
</evidence>
<evidence type="ECO:0000269" key="14">
    <source>
    </source>
</evidence>
<evidence type="ECO:0000269" key="15">
    <source>
    </source>
</evidence>
<evidence type="ECO:0000269" key="16">
    <source>
    </source>
</evidence>
<evidence type="ECO:0000269" key="17">
    <source>
    </source>
</evidence>
<evidence type="ECO:0000269" key="18">
    <source>
    </source>
</evidence>
<evidence type="ECO:0000269" key="19">
    <source>
    </source>
</evidence>
<evidence type="ECO:0000269" key="20">
    <source>
    </source>
</evidence>
<evidence type="ECO:0000269" key="21">
    <source>
    </source>
</evidence>
<evidence type="ECO:0000269" key="22">
    <source>
    </source>
</evidence>
<evidence type="ECO:0000269" key="23">
    <source>
    </source>
</evidence>
<evidence type="ECO:0000269" key="24">
    <source>
    </source>
</evidence>
<evidence type="ECO:0000269" key="25">
    <source>
    </source>
</evidence>
<evidence type="ECO:0000269" key="26">
    <source>
    </source>
</evidence>
<evidence type="ECO:0000269" key="27">
    <source>
    </source>
</evidence>
<evidence type="ECO:0000269" key="28">
    <source>
    </source>
</evidence>
<evidence type="ECO:0000269" key="29">
    <source>
    </source>
</evidence>
<evidence type="ECO:0000269" key="30">
    <source>
    </source>
</evidence>
<evidence type="ECO:0000269" key="31">
    <source>
    </source>
</evidence>
<evidence type="ECO:0000269" key="32">
    <source>
    </source>
</evidence>
<evidence type="ECO:0000269" key="33">
    <source>
    </source>
</evidence>
<evidence type="ECO:0000269" key="34">
    <source>
    </source>
</evidence>
<evidence type="ECO:0000269" key="35">
    <source>
    </source>
</evidence>
<evidence type="ECO:0000269" key="36">
    <source>
    </source>
</evidence>
<evidence type="ECO:0000269" key="37">
    <source>
    </source>
</evidence>
<evidence type="ECO:0000269" key="38">
    <source>
    </source>
</evidence>
<evidence type="ECO:0000269" key="39">
    <source>
    </source>
</evidence>
<evidence type="ECO:0000269" key="40">
    <source>
    </source>
</evidence>
<evidence type="ECO:0000269" key="41">
    <source>
    </source>
</evidence>
<evidence type="ECO:0000269" key="42">
    <source>
    </source>
</evidence>
<evidence type="ECO:0000269" key="43">
    <source>
    </source>
</evidence>
<evidence type="ECO:0000269" key="44">
    <source>
    </source>
</evidence>
<evidence type="ECO:0000269" key="45">
    <source>
    </source>
</evidence>
<evidence type="ECO:0000269" key="46">
    <source>
    </source>
</evidence>
<evidence type="ECO:0000269" key="47">
    <source>
    </source>
</evidence>
<evidence type="ECO:0000269" key="48">
    <source>
    </source>
</evidence>
<evidence type="ECO:0000269" key="49">
    <source>
    </source>
</evidence>
<evidence type="ECO:0000269" key="50">
    <source>
    </source>
</evidence>
<evidence type="ECO:0000269" key="51">
    <source>
    </source>
</evidence>
<evidence type="ECO:0000269" key="52">
    <source>
    </source>
</evidence>
<evidence type="ECO:0000269" key="53">
    <source>
    </source>
</evidence>
<evidence type="ECO:0000269" key="54">
    <source>
    </source>
</evidence>
<evidence type="ECO:0000269" key="55">
    <source>
    </source>
</evidence>
<evidence type="ECO:0000269" key="56">
    <source>
    </source>
</evidence>
<evidence type="ECO:0000269" key="57">
    <source>
    </source>
</evidence>
<evidence type="ECO:0000269" key="58">
    <source>
    </source>
</evidence>
<evidence type="ECO:0000269" key="59">
    <source>
    </source>
</evidence>
<evidence type="ECO:0000269" key="60">
    <source>
    </source>
</evidence>
<evidence type="ECO:0000269" key="61">
    <source>
    </source>
</evidence>
<evidence type="ECO:0000269" key="62">
    <source>
    </source>
</evidence>
<evidence type="ECO:0000269" key="63">
    <source>
    </source>
</evidence>
<evidence type="ECO:0000269" key="64">
    <source>
    </source>
</evidence>
<evidence type="ECO:0000269" key="65">
    <source>
    </source>
</evidence>
<evidence type="ECO:0000269" key="66">
    <source>
    </source>
</evidence>
<evidence type="ECO:0000269" key="67">
    <source>
    </source>
</evidence>
<evidence type="ECO:0000269" key="68">
    <source>
    </source>
</evidence>
<evidence type="ECO:0000269" key="69">
    <source>
    </source>
</evidence>
<evidence type="ECO:0000269" key="70">
    <source>
    </source>
</evidence>
<evidence type="ECO:0000269" key="71">
    <source>
    </source>
</evidence>
<evidence type="ECO:0000269" key="72">
    <source>
    </source>
</evidence>
<evidence type="ECO:0000269" key="73">
    <source>
    </source>
</evidence>
<evidence type="ECO:0000269" key="74">
    <source>
    </source>
</evidence>
<evidence type="ECO:0000269" key="75">
    <source>
    </source>
</evidence>
<evidence type="ECO:0000269" key="76">
    <source>
    </source>
</evidence>
<evidence type="ECO:0000269" key="77">
    <source>
    </source>
</evidence>
<evidence type="ECO:0000269" key="78">
    <source>
    </source>
</evidence>
<evidence type="ECO:0000269" key="79">
    <source>
    </source>
</evidence>
<evidence type="ECO:0000269" key="80">
    <source>
    </source>
</evidence>
<evidence type="ECO:0000269" key="81">
    <source>
    </source>
</evidence>
<evidence type="ECO:0000269" key="82">
    <source>
    </source>
</evidence>
<evidence type="ECO:0000269" key="83">
    <source>
    </source>
</evidence>
<evidence type="ECO:0000269" key="84">
    <source>
    </source>
</evidence>
<evidence type="ECO:0000269" key="85">
    <source>
    </source>
</evidence>
<evidence type="ECO:0000269" key="86">
    <source>
    </source>
</evidence>
<evidence type="ECO:0000269" key="87">
    <source>
    </source>
</evidence>
<evidence type="ECO:0000269" key="88">
    <source>
    </source>
</evidence>
<evidence type="ECO:0000303" key="89">
    <source>
    </source>
</evidence>
<evidence type="ECO:0000303" key="90">
    <source>
    </source>
</evidence>
<evidence type="ECO:0000305" key="91"/>
<evidence type="ECO:0000305" key="92">
    <source>
    </source>
</evidence>
<evidence type="ECO:0000305" key="93">
    <source>
    </source>
</evidence>
<evidence type="ECO:0000305" key="94">
    <source>
    </source>
</evidence>
<evidence type="ECO:0000305" key="95">
    <source>
    </source>
</evidence>
<evidence type="ECO:0000312" key="96">
    <source>
        <dbReference type="HGNC" id="HGNC:11584"/>
    </source>
</evidence>
<evidence type="ECO:0007744" key="97">
    <source>
    </source>
</evidence>
<evidence type="ECO:0007829" key="98">
    <source>
        <dbReference type="PDB" id="4EFO"/>
    </source>
</evidence>
<evidence type="ECO:0007829" key="99">
    <source>
        <dbReference type="PDB" id="4EUT"/>
    </source>
</evidence>
<evidence type="ECO:0007829" key="100">
    <source>
        <dbReference type="PDB" id="4EUU"/>
    </source>
</evidence>
<evidence type="ECO:0007829" key="101">
    <source>
        <dbReference type="PDB" id="4IM0"/>
    </source>
</evidence>
<evidence type="ECO:0007829" key="102">
    <source>
        <dbReference type="PDB" id="4IWO"/>
    </source>
</evidence>
<evidence type="ECO:0007829" key="103">
    <source>
        <dbReference type="PDB" id="4IWP"/>
    </source>
</evidence>
<evidence type="ECO:0007829" key="104">
    <source>
        <dbReference type="PDB" id="4IWQ"/>
    </source>
</evidence>
<evidence type="ECO:0007829" key="105">
    <source>
        <dbReference type="PDB" id="5EP6"/>
    </source>
</evidence>
<evidence type="ECO:0007829" key="106">
    <source>
        <dbReference type="PDB" id="6CQ0"/>
    </source>
</evidence>
<evidence type="ECO:0007829" key="107">
    <source>
        <dbReference type="PDB" id="6NT9"/>
    </source>
</evidence>
<evidence type="ECO:0007829" key="108">
    <source>
        <dbReference type="PDB" id="6O8B"/>
    </source>
</evidence>
<evidence type="ECO:0007829" key="109">
    <source>
        <dbReference type="PDB" id="6RSU"/>
    </source>
</evidence>
<feature type="chain" id="PRO_0000086743" description="Serine/threonine-protein kinase TBK1">
    <location>
        <begin position="1"/>
        <end position="729"/>
    </location>
</feature>
<feature type="domain" description="Protein kinase" evidence="3">
    <location>
        <begin position="9"/>
        <end position="310"/>
    </location>
</feature>
<feature type="domain" description="Ubiquitin-like">
    <location>
        <begin position="309"/>
        <end position="385"/>
    </location>
</feature>
<feature type="region of interest" description="Interaction with AZI2, TANK and TBKBP1" evidence="40">
    <location>
        <begin position="621"/>
        <end position="729"/>
    </location>
</feature>
<feature type="coiled-coil region" evidence="1">
    <location>
        <begin position="407"/>
        <end position="657"/>
    </location>
</feature>
<feature type="coiled-coil region" evidence="2">
    <location>
        <begin position="658"/>
        <end position="713"/>
    </location>
</feature>
<feature type="active site" description="Proton acceptor" evidence="93 94 95">
    <location>
        <position position="135"/>
    </location>
</feature>
<feature type="binding site" evidence="3">
    <location>
        <begin position="15"/>
        <end position="23"/>
    </location>
    <ligand>
        <name>ATP</name>
        <dbReference type="ChEBI" id="CHEBI:30616"/>
    </ligand>
</feature>
<feature type="binding site" evidence="91">
    <location>
        <position position="38"/>
    </location>
    <ligand>
        <name>ATP</name>
        <dbReference type="ChEBI" id="CHEBI:30616"/>
    </ligand>
</feature>
<feature type="modified residue" description="Phosphoserine; by autocatalysis and IKKB" evidence="6 43 46">
    <location>
        <position position="172"/>
    </location>
</feature>
<feature type="modified residue" description="N6-methyllysine; by SETD4" evidence="88">
    <location>
        <position position="607"/>
    </location>
</feature>
<feature type="modified residue" description="Phosphoserine" evidence="97">
    <location>
        <position position="716"/>
    </location>
</feature>
<feature type="cross-link" description="Glycyl lysine isopeptide (Lys-Gly) (interchain with G-Cter in ubiquitin)" evidence="44">
    <location>
        <position position="30"/>
    </location>
</feature>
<feature type="cross-link" description="Glycyl lysine isopeptide (Lys-Gly) (interchain with G-Cter in ubiquitin)" evidence="44">
    <location>
        <position position="401"/>
    </location>
</feature>
<feature type="cross-link" description="Glycyl lysine isopeptide (Lys-Gly) (interchain with G-Cter in ubiquitin)" evidence="42 57">
    <location>
        <position position="670"/>
    </location>
</feature>
<feature type="sequence variant" id="VAR_084111" description="Loss of IFNB induction." evidence="81">
    <original>F</original>
    <variation>S</variation>
    <location>
        <position position="24"/>
    </location>
</feature>
<feature type="sequence variant" id="VAR_073938" description="In FTDALS4; loss of kinase activity." evidence="51">
    <original>R</original>
    <variation>H</variation>
    <location>
        <position position="47"/>
    </location>
</feature>
<feature type="sequence variant" id="VAR_080517" description="In IIAE8; decreased expression levels; dbSNP:rs1010930015." evidence="43">
    <original>D</original>
    <variation>A</variation>
    <location>
        <position position="50"/>
    </location>
</feature>
<feature type="sequence variant" id="VAR_073939" description="In FTDALS4; dbSNP:rs1366668789." evidence="51">
    <original>Y</original>
    <variation>C</variation>
    <location>
        <position position="105"/>
    </location>
</feature>
<feature type="sequence variant" id="VAR_069754" description="In dbSNP:rs55824172." evidence="36">
    <original>S</original>
    <variation>F</variation>
    <location>
        <position position="151"/>
    </location>
</feature>
<feature type="sequence variant" id="VAR_084112" description="No effect on IFNB induction." evidence="81">
    <original>V</original>
    <variation>L</variation>
    <location>
        <position position="152"/>
    </location>
</feature>
<feature type="sequence variant" id="VAR_080518" description="In IIAE8; loss of kinase activity; loss of autophosphorylation at S-172; loss of IFNB induction; dbSNP:rs1555202947." evidence="43 81">
    <original>G</original>
    <variation>A</variation>
    <location>
        <position position="159"/>
    </location>
</feature>
<feature type="sequence variant" id="VAR_080519" description="In IIAE8; uncertain significance; dbSNP:rs1555203557." evidence="53">
    <original>I</original>
    <variation>V</variation>
    <location>
        <position position="207"/>
    </location>
</feature>
<feature type="sequence variant" id="VAR_089908" description="In AIARV; likely pathogenic; severely decreased function in IRF3 phosphorylation and in positive regulation of type I interferon-mediated signaling pathway; does not rescue defective IRF3 phosphorylation on S-386 and IFN-1 stimulated gene expression in TBK1-deficient patient cells." evidence="85">
    <original>Y</original>
    <variation>D</variation>
    <location>
        <position position="212"/>
    </location>
</feature>
<feature type="sequence variant" id="VAR_041208" description="In dbSNP:rs56196591." evidence="21">
    <original>R</original>
    <variation>Q</variation>
    <location>
        <position position="271"/>
    </location>
</feature>
<feature type="sequence variant" id="VAR_041209" description="In dbSNP:rs34774243." evidence="21">
    <original>K</original>
    <variation>E</variation>
    <location>
        <position position="291"/>
    </location>
</feature>
<feature type="sequence variant" id="VAR_041210" description="In a breast pleomorphic lobular carcinoma sample; somatic mutation." evidence="21">
    <original>D</original>
    <variation>H</variation>
    <location>
        <position position="296"/>
    </location>
</feature>
<feature type="sequence variant" id="VAR_073940" description="In FTDALS4; dbSNP:rs770942184." evidence="51">
    <original>I</original>
    <variation>T</variation>
    <location>
        <position position="305"/>
    </location>
</feature>
<feature type="sequence variant" id="VAR_069755" description="In FTDALS4; uncertain significance; dbSNP:rs201970436." evidence="36 52">
    <original>L</original>
    <variation>I</variation>
    <location>
        <position position="306"/>
    </location>
</feature>
<feature type="sequence variant" id="VAR_084113" description="Loss of IFNB induction." evidence="81">
    <location>
        <begin position="308"/>
        <end position="729"/>
    </location>
</feature>
<feature type="sequence variant" id="VAR_073941" description="In FTDALS4; reduced kinase activity." evidence="51">
    <original>R</original>
    <variation>Q</variation>
    <location>
        <position position="308"/>
    </location>
</feature>
<feature type="sequence variant" id="VAR_073942" description="In FTDALS4; reduced kinase activity; dbSNP:rs758357594." evidence="51">
    <original>R</original>
    <variation>Q</variation>
    <location>
        <position position="357"/>
    </location>
</feature>
<feature type="sequence variant" id="VAR_084114" description="No effect on IFNB induction." evidence="81">
    <original>R</original>
    <variation>Q</variation>
    <location>
        <position position="384"/>
    </location>
</feature>
<feature type="sequence variant" id="VAR_024746" description="In dbSNP:rs17857028." evidence="16">
    <original>N</original>
    <variation>D</variation>
    <location>
        <position position="388"/>
    </location>
</feature>
<feature type="sequence variant" id="VAR_084115" description="No effect on IFNB induction." evidence="81">
    <original>N</original>
    <variation>S</variation>
    <location>
        <position position="388"/>
    </location>
</feature>
<feature type="sequence variant" id="VAR_084116" description="No effect on IFNB induction." evidence="81">
    <original>I</original>
    <variation>T</variation>
    <location>
        <position position="397"/>
    </location>
</feature>
<feature type="sequence variant" id="VAR_073943" description="In FTDALS4; dbSNP:rs756751089." evidence="52">
    <original>K</original>
    <variation>E</variation>
    <location>
        <position position="401"/>
    </location>
</feature>
<feature type="sequence variant" id="VAR_041211" description="In a colorectal adenocarcinoma sample; somatic mutation; dbSNP:rs1262765773." evidence="21">
    <original>G</original>
    <variation>R</variation>
    <location>
        <position position="410"/>
    </location>
</feature>
<feature type="sequence variant" id="VAR_089909" description="In AIARV; pathogenic." evidence="79 85">
    <location>
        <begin position="440"/>
        <end position="729"/>
    </location>
</feature>
<feature type="sequence variant" id="VAR_041212" description="In dbSNP:rs35635889." evidence="21 36">
    <original>V</original>
    <variation>A</variation>
    <location>
        <position position="464"/>
    </location>
</feature>
<feature type="sequence variant" id="VAR_084117" description="No effect on IFNB induction." evidence="81">
    <original>L</original>
    <variation>I</variation>
    <location>
        <position position="508"/>
    </location>
</feature>
<feature type="sequence variant" id="VAR_084118" description="No effect on IFNB induction." evidence="81">
    <original>I</original>
    <variation>M</variation>
    <location>
        <position position="522"/>
    </location>
</feature>
<feature type="sequence variant" id="VAR_084119" description="No effect on IFNB induction." evidence="81">
    <original>A</original>
    <variation>T</variation>
    <location>
        <position position="533"/>
    </location>
</feature>
<feature type="sequence variant" id="VAR_073944" description="In FTDALS4; loss of kinase activity." evidence="51">
    <original>M</original>
    <variation>R</variation>
    <location>
        <position position="559"/>
    </location>
</feature>
<feature type="sequence variant" id="VAR_024747" description="In dbSNP:rs17853341." evidence="16">
    <original>K</original>
    <variation>Q</variation>
    <location>
        <position position="570"/>
    </location>
</feature>
<feature type="sequence variant" id="VAR_073945" description="In FTDALS4; dbSNP:rs765035140." evidence="51">
    <original>A</original>
    <variation>V</variation>
    <location>
        <position position="571"/>
    </location>
</feature>
<feature type="sequence variant" id="VAR_073946" description="In FTDALS4; dbSNP:rs899858451." evidence="51">
    <original>M</original>
    <variation>V</variation>
    <location>
        <position position="598"/>
    </location>
</feature>
<feature type="sequence variant" id="VAR_089910" description="In AIARV; pathogenic; homozygous patient-derived cells show high rates of cell death; loss of protein expression in homozygous patient cells." evidence="85">
    <location>
        <begin position="619"/>
        <end position="729"/>
    </location>
</feature>
<feature type="sequence variant" id="VAR_073947" description="In FTDALS4." evidence="51">
    <location>
        <position position="643"/>
    </location>
</feature>
<feature type="sequence variant" id="VAR_084120" description="No effect on IFNB induction." evidence="81">
    <original>E</original>
    <variation>Q</variation>
    <location>
        <position position="653"/>
    </location>
</feature>
<feature type="sequence variant" id="VAR_084121" description="No effect on IFNB induction." evidence="81">
    <original>P</original>
    <variation>S</variation>
    <location>
        <position position="659"/>
    </location>
</feature>
<feature type="sequence variant" id="VAR_073948" description="In FTDALS4; loss of kinase activity; impairs binding to OPTN; dbSNP:rs748112833." evidence="51 52">
    <original>E</original>
    <variation>K</variation>
    <location>
        <position position="696"/>
    </location>
</feature>
<feature type="mutagenesis site" description="Decreases ubiquitination. Abolishes ubiquitination, phosphorylation and kinase activity; when associated with R-401." evidence="44">
    <original>K</original>
    <variation>R</variation>
    <location>
        <position position="30"/>
    </location>
</feature>
<feature type="mutagenesis site" description="Decreases phosphorylation and kinase activity." evidence="44">
    <original>D</original>
    <variation>A</variation>
    <location>
        <position position="33"/>
    </location>
</feature>
<feature type="mutagenesis site" description="Loss of kinase activity." evidence="4 43 44 45 65 72 73">
    <original>K</original>
    <variation>A</variation>
    <location>
        <position position="38"/>
    </location>
</feature>
<feature type="mutagenesis site" description="Loss of kinase activity." evidence="40 44 45 69">
    <original>D</original>
    <variation>N</variation>
    <location>
        <position position="135"/>
    </location>
</feature>
<feature type="mutagenesis site" description="Loss of kinase activity. No effect on dimerization. Loss of USP38-mediated degradation." evidence="6 45 57">
    <original>S</original>
    <variation>A</variation>
    <location>
        <position position="172"/>
    </location>
</feature>
<feature type="mutagenesis site" description="Decreased kinase activity." evidence="6 45">
    <original>S</original>
    <variation>E</variation>
    <location>
        <position position="172"/>
    </location>
</feature>
<feature type="mutagenesis site" description="Decreases kinase activity. No effect on phosphorylation." evidence="45">
    <original>L</original>
    <variation>E</variation>
    <location>
        <position position="316"/>
    </location>
</feature>
<feature type="mutagenesis site" description="Abolishes phosphorylation and kinase activity." evidence="45">
    <original>Y</original>
    <variation>E</variation>
    <location>
        <position position="325"/>
    </location>
</feature>
<feature type="mutagenesis site" description="Decreases phosphorylation and kinase activity. Abolishes dimerization; when associated with A-357 or R-448." evidence="44 45">
    <original>E</original>
    <variation>R</variation>
    <location>
        <position position="355"/>
    </location>
</feature>
<feature type="mutagenesis site" description="Decreases phosphorylation and kinase activity. Abolishes dimerization; when associated with R-355." evidence="44">
    <original>R</original>
    <variation>A</variation>
    <location>
        <position position="357"/>
    </location>
</feature>
<feature type="mutagenesis site" description="Decreases ubiquitination. Abolishes ubiquitination, phosphorylation and kinase activity; when associated with R-30." evidence="44">
    <original>K</original>
    <variation>R</variation>
    <location>
        <position position="401"/>
    </location>
</feature>
<feature type="mutagenesis site" description="Decreases phosphorylation and kinase activity. Abolishes dimerization; when associated with R-355." evidence="45">
    <original>E</original>
    <variation>R</variation>
    <location>
        <position position="448"/>
    </location>
</feature>
<feature type="mutagenesis site" description="Abolishes dimerization and decreases kinase activity but no effect on phosphorylation; when associated with E-466 and E-470." evidence="45">
    <original>H</original>
    <variation>E</variation>
    <location>
        <position position="459"/>
    </location>
</feature>
<feature type="mutagenesis site" description="Abolishes dimerization and decreases kinase activity but no effect on phosphorylation; when associated with E-459 and E-470." evidence="45">
    <original>I</original>
    <variation>E</variation>
    <location>
        <position position="466"/>
    </location>
</feature>
<feature type="mutagenesis site" description="Abolishes dimerization and decreases kinase activity but no effect on phosphorylation; when associated with E-459 and E-466." evidence="45">
    <original>F</original>
    <variation>E</variation>
    <location>
        <position position="470"/>
    </location>
</feature>
<feature type="mutagenesis site" description="Decreases phosphorylation and kinase activity. Abolishes dimerization." evidence="44">
    <original>R</original>
    <variation>D</variation>
    <location>
        <position position="547"/>
    </location>
</feature>
<feature type="mutagenesis site" description="Decreases kinase activity. Reduced phosphorylation of STING1." evidence="44 69">
    <original>Y</original>
    <variation>A</variation>
    <location>
        <position position="577"/>
    </location>
</feature>
<feature type="mutagenesis site" description="Reduced phosphorylation of STING1." evidence="69">
    <original>N</original>
    <variation>A</variation>
    <location>
        <position position="578"/>
    </location>
</feature>
<feature type="mutagenesis site" description="Decreases kinase activity." evidence="44">
    <original>E</original>
    <variation>A</variation>
    <location>
        <position position="580"/>
    </location>
</feature>
<feature type="mutagenesis site" description="Reduced phosphorylation of STING1." evidence="69">
    <original>Q</original>
    <variation>A</variation>
    <location>
        <position position="581"/>
    </location>
</feature>
<feature type="mutagenesis site" description="Decreases kinase activity." evidence="44">
    <original>I</original>
    <variation>A</variation>
    <location>
        <position position="582"/>
    </location>
</feature>
<feature type="mutagenesis site" description="Decreased IFNB1 promoter activation." evidence="88">
    <original>K</original>
    <variation>A</variation>
    <location>
        <position position="584"/>
    </location>
</feature>
<feature type="mutagenesis site" description="Decreases phosphorylation and kinase activity." evidence="44">
    <original>K</original>
    <variation>D</variation>
    <location>
        <position position="589"/>
    </location>
</feature>
<feature type="mutagenesis site" description="Attenuated homodimerization during Sendai virus infection; decreased interaction with IRF3 or MAVS; decreased IFNB1 promoter activation." evidence="88">
    <original>K</original>
    <variation>A</variation>
    <variation>R</variation>
    <location>
        <position position="607"/>
    </location>
</feature>
<feature type="mutagenesis site" description="Abrogates both 'Lys-48'-linked and 'Lys-33'-linked ubiquitination." evidence="57">
    <original>K</original>
    <variation>R</variation>
    <location>
        <position position="670"/>
    </location>
</feature>
<feature type="mutagenesis site" description="Decreases interaction with TANK." evidence="40">
    <original>M</original>
    <variation>A</variation>
    <location>
        <position position="690"/>
    </location>
</feature>
<feature type="mutagenesis site" description="Almost abolishes interaction with TANK." evidence="40">
    <original>L</original>
    <variation>A</variation>
    <location>
        <position position="693"/>
    </location>
</feature>
<feature type="mutagenesis site" description="Strongly decreases interaction with TANK and TBKBP1. No effect on phosphorylation." evidence="40">
    <original>K</original>
    <variation>E</variation>
    <location>
        <position position="694"/>
    </location>
</feature>
<feature type="mutagenesis site" description="Strongly decreases interaction with AZI2, TANK and TBKBP1. No effect on phosphorylation." evidence="40">
    <original>L</original>
    <variation>A</variation>
    <location>
        <position position="704"/>
    </location>
</feature>
<feature type="mutagenesis site" description="Decreases interaction with TANK." evidence="40">
    <original>N</original>
    <variation>A</variation>
    <location>
        <position position="708"/>
    </location>
</feature>
<feature type="mutagenesis site" description="Almost abolishes interaction with TANK." evidence="40">
    <original>L</original>
    <variation>A</variation>
    <location>
        <position position="711"/>
    </location>
</feature>
<feature type="strand" evidence="106">
    <location>
        <begin position="1"/>
        <end position="3"/>
    </location>
</feature>
<feature type="strand" evidence="100">
    <location>
        <begin position="5"/>
        <end position="17"/>
    </location>
</feature>
<feature type="strand" evidence="100">
    <location>
        <begin position="19"/>
        <end position="28"/>
    </location>
</feature>
<feature type="turn" evidence="100">
    <location>
        <begin position="29"/>
        <end position="31"/>
    </location>
</feature>
<feature type="strand" evidence="100">
    <location>
        <begin position="34"/>
        <end position="40"/>
    </location>
</feature>
<feature type="helix" evidence="100">
    <location>
        <begin position="42"/>
        <end position="46"/>
    </location>
</feature>
<feature type="helix" evidence="100">
    <location>
        <begin position="49"/>
        <end position="61"/>
    </location>
</feature>
<feature type="strand" evidence="102">
    <location>
        <begin position="65"/>
        <end position="67"/>
    </location>
</feature>
<feature type="strand" evidence="100">
    <location>
        <begin position="70"/>
        <end position="75"/>
    </location>
</feature>
<feature type="turn" evidence="100">
    <location>
        <begin position="77"/>
        <end position="79"/>
    </location>
</feature>
<feature type="strand" evidence="100">
    <location>
        <begin position="82"/>
        <end position="87"/>
    </location>
</feature>
<feature type="helix" evidence="100">
    <location>
        <begin position="94"/>
        <end position="99"/>
    </location>
</feature>
<feature type="helix" evidence="100">
    <location>
        <begin position="101"/>
        <end position="103"/>
    </location>
</feature>
<feature type="helix" evidence="100">
    <location>
        <begin position="109"/>
        <end position="128"/>
    </location>
</feature>
<feature type="helix" evidence="100">
    <location>
        <begin position="138"/>
        <end position="140"/>
    </location>
</feature>
<feature type="strand" evidence="100">
    <location>
        <begin position="141"/>
        <end position="145"/>
    </location>
</feature>
<feature type="strand" evidence="100">
    <location>
        <begin position="151"/>
        <end position="155"/>
    </location>
</feature>
<feature type="turn" evidence="104">
    <location>
        <begin position="161"/>
        <end position="163"/>
    </location>
</feature>
<feature type="helix" evidence="99">
    <location>
        <begin position="167"/>
        <end position="169"/>
    </location>
</feature>
<feature type="strand" evidence="99">
    <location>
        <begin position="173"/>
        <end position="175"/>
    </location>
</feature>
<feature type="helix" evidence="100">
    <location>
        <begin position="177"/>
        <end position="179"/>
    </location>
</feature>
<feature type="helix" evidence="100">
    <location>
        <begin position="182"/>
        <end position="188"/>
    </location>
</feature>
<feature type="helix" evidence="100">
    <location>
        <begin position="202"/>
        <end position="216"/>
    </location>
</feature>
<feature type="strand" evidence="100">
    <location>
        <begin position="220"/>
        <end position="222"/>
    </location>
</feature>
<feature type="helix" evidence="100">
    <location>
        <begin position="227"/>
        <end position="229"/>
    </location>
</feature>
<feature type="helix" evidence="100">
    <location>
        <begin position="231"/>
        <end position="240"/>
    </location>
</feature>
<feature type="strand" evidence="100">
    <location>
        <begin position="247"/>
        <end position="250"/>
    </location>
</feature>
<feature type="strand" evidence="107">
    <location>
        <begin position="252"/>
        <end position="254"/>
    </location>
</feature>
<feature type="strand" evidence="100">
    <location>
        <begin position="257"/>
        <end position="262"/>
    </location>
</feature>
<feature type="helix" evidence="100">
    <location>
        <begin position="271"/>
        <end position="284"/>
    </location>
</feature>
<feature type="strand" evidence="103">
    <location>
        <begin position="285"/>
        <end position="287"/>
    </location>
</feature>
<feature type="turn" evidence="100">
    <location>
        <begin position="289"/>
        <end position="291"/>
    </location>
</feature>
<feature type="helix" evidence="98">
    <location>
        <begin position="305"/>
        <end position="307"/>
    </location>
</feature>
<feature type="strand" evidence="98">
    <location>
        <begin position="308"/>
        <end position="315"/>
    </location>
</feature>
<feature type="turn" evidence="98">
    <location>
        <begin position="316"/>
        <end position="319"/>
    </location>
</feature>
<feature type="strand" evidence="98">
    <location>
        <begin position="320"/>
        <end position="327"/>
    </location>
</feature>
<feature type="helix" evidence="98">
    <location>
        <begin position="332"/>
        <end position="343"/>
    </location>
</feature>
<feature type="helix" evidence="98">
    <location>
        <begin position="347"/>
        <end position="349"/>
    </location>
</feature>
<feature type="strand" evidence="98">
    <location>
        <begin position="350"/>
        <end position="354"/>
    </location>
</feature>
<feature type="strand" evidence="98">
    <location>
        <begin position="357"/>
        <end position="359"/>
    </location>
</feature>
<feature type="helix" evidence="98">
    <location>
        <begin position="367"/>
        <end position="369"/>
    </location>
</feature>
<feature type="strand" evidence="101">
    <location>
        <begin position="375"/>
        <end position="377"/>
    </location>
</feature>
<feature type="strand" evidence="98">
    <location>
        <begin position="379"/>
        <end position="383"/>
    </location>
</feature>
<feature type="helix" evidence="101">
    <location>
        <begin position="408"/>
        <end position="480"/>
    </location>
</feature>
<feature type="helix" evidence="101">
    <location>
        <begin position="498"/>
        <end position="526"/>
    </location>
</feature>
<feature type="turn" evidence="109">
    <location>
        <begin position="527"/>
        <end position="529"/>
    </location>
</feature>
<feature type="strand" evidence="102">
    <location>
        <begin position="530"/>
        <end position="532"/>
    </location>
</feature>
<feature type="helix" evidence="101">
    <location>
        <begin position="535"/>
        <end position="539"/>
    </location>
</feature>
<feature type="helix" evidence="101">
    <location>
        <begin position="544"/>
        <end position="546"/>
    </location>
</feature>
<feature type="helix" evidence="101">
    <location>
        <begin position="548"/>
        <end position="571"/>
    </location>
</feature>
<feature type="strand" evidence="108">
    <location>
        <begin position="572"/>
        <end position="574"/>
    </location>
</feature>
<feature type="helix" evidence="101">
    <location>
        <begin position="577"/>
        <end position="603"/>
    </location>
</feature>
<feature type="helix" evidence="101">
    <location>
        <begin position="605"/>
        <end position="647"/>
    </location>
</feature>
<feature type="turn" evidence="101">
    <location>
        <begin position="648"/>
        <end position="651"/>
    </location>
</feature>
<feature type="helix" evidence="105">
    <location>
        <begin position="680"/>
        <end position="714"/>
    </location>
</feature>
<feature type="strand" evidence="105">
    <location>
        <begin position="715"/>
        <end position="717"/>
    </location>
</feature>
<keyword id="KW-0002">3D-structure</keyword>
<keyword id="KW-0036">Amyotrophic lateral sclerosis</keyword>
<keyword id="KW-0051">Antiviral defense</keyword>
<keyword id="KW-0067">ATP-binding</keyword>
<keyword id="KW-0175">Coiled coil</keyword>
<keyword id="KW-0963">Cytoplasm</keyword>
<keyword id="KW-0225">Disease variant</keyword>
<keyword id="KW-0955">Glaucoma</keyword>
<keyword id="KW-0945">Host-virus interaction</keyword>
<keyword id="KW-0391">Immunity</keyword>
<keyword id="KW-0399">Innate immunity</keyword>
<keyword id="KW-1017">Isopeptide bond</keyword>
<keyword id="KW-0418">Kinase</keyword>
<keyword id="KW-0488">Methylation</keyword>
<keyword id="KW-0523">Neurodegeneration</keyword>
<keyword id="KW-0547">Nucleotide-binding</keyword>
<keyword id="KW-0597">Phosphoprotein</keyword>
<keyword id="KW-1267">Proteomics identification</keyword>
<keyword id="KW-1185">Reference proteome</keyword>
<keyword id="KW-0723">Serine/threonine-protein kinase</keyword>
<keyword id="KW-0808">Transferase</keyword>
<keyword id="KW-0832">Ubl conjugation</keyword>
<protein>
    <recommendedName>
        <fullName evidence="91">Serine/threonine-protein kinase TBK1</fullName>
        <ecNumber evidence="13 23 33 35 37 38 49">2.7.11.1</ecNumber>
    </recommendedName>
    <alternativeName>
        <fullName evidence="90">NF-kappa-B-activating kinase</fullName>
    </alternativeName>
    <alternativeName>
        <fullName>T2K</fullName>
    </alternativeName>
    <alternativeName>
        <fullName evidence="89">TANK-binding kinase 1</fullName>
    </alternativeName>
</protein>
<gene>
    <name evidence="89 96" type="primary">TBK1</name>
    <name evidence="90" type="synonym">NAK</name>
</gene>
<name>TBK1_HUMAN</name>
<accession>Q9UHD2</accession>
<accession>A8K4S4</accession>
<accession>Q8IYV3</accession>
<accession>Q9NUJ5</accession>
<sequence length="729" mass="83642">MQSTSNHLWLLSDILGQGATANVFRGRHKKTGDLFAIKVFNNISFLRPVDVQMREFEVLKKLNHKNIVKLFAIEEETTTRHKVLIMEFCPCGSLYTVLEEPSNAYGLPESEFLIVLRDVVGGMNHLRENGIVHRDIKPGNIMRVIGEDGQSVYKLTDFGAARELEDDEQFVSLYGTEEYLHPDMYERAVLRKDHQKKYGATVDLWSIGVTFYHAATGSLPFRPFEGPRRNKEVMYKIITGKPSGAISGVQKAENGPIDWSGDMPVSCSLSRGLQVLLTPVLANILEADQEKCWGFDQFFAETSDILHRMVIHVFSLQQMTAHKIYIHSYNTATIFHELVYKQTKIISSNQELIYEGRRLVLEPGRLAQHFPKTTEENPIFVVSREPLNTIGLIYEKISLPKVHPRYDLDGDASMAKAITGVVCYACRIASTLLLYQELMRKGIRWLIELIKDDYNETVHKKTEVVITLDFCIRNIEKTVKVYEKLMKINLEAAELGEISDIHTKLLRLSSSQGTIETSLQDIDSRLSPGGSLADAWAHQEGTHPKDRNVEKLQVLLNCMTEIYYQFKKDKAERRLAYNEEQIHKFDKQKLYYHATKAMTHFTDECVKKYEAFLNKSEEWIRKMLHLRKQLLSLTNQCFDIEEEVSKYQEYTNELQETLPQKMFTASSGIKHTMTPIYPSSNTLVEMTLGMKKLKEEMEGVVKELAENNHILERFGSLTMDGGLRNVDCL</sequence>
<organism>
    <name type="scientific">Homo sapiens</name>
    <name type="common">Human</name>
    <dbReference type="NCBI Taxonomy" id="9606"/>
    <lineage>
        <taxon>Eukaryota</taxon>
        <taxon>Metazoa</taxon>
        <taxon>Chordata</taxon>
        <taxon>Craniata</taxon>
        <taxon>Vertebrata</taxon>
        <taxon>Euteleostomi</taxon>
        <taxon>Mammalia</taxon>
        <taxon>Eutheria</taxon>
        <taxon>Euarchontoglires</taxon>
        <taxon>Primates</taxon>
        <taxon>Haplorrhini</taxon>
        <taxon>Catarrhini</taxon>
        <taxon>Hominidae</taxon>
        <taxon>Homo</taxon>
    </lineage>
</organism>
<comment type="function">
    <text evidence="1 4 5 6 7 8 11 13 14 15 18 23 33 35 37 38 40 43 44 45 46 49 54 55 56 65 69 72 73 76 81 85 88">Serine/threonine kinase that plays an essential role in regulating inflammatory responses to foreign agents (PubMed:10581243, PubMed:11839743, PubMed:12692549, PubMed:12702806, PubMed:14703513, PubMed:15367631, PubMed:15485837, PubMed:18583960, PubMed:21138416, PubMed:23453971, PubMed:23453972, PubMed:23746807, PubMed:25636800, PubMed:26611359, PubMed:32404352, PubMed:34363755, PubMed:32298923). Following activation of toll-like receptors by viral or bacterial components, associates with TRAF3 and TANK and phosphorylates interferon regulatory factors (IRFs) IRF3 and IRF7 as well as DDX3X (PubMed:12692549, PubMed:12702806, PubMed:14703513, PubMed:15367631, PubMed:18583960, PubMed:25636800). This activity allows subsequent homodimerization and nuclear translocation of the IRFs leading to transcriptional activation of pro-inflammatory and antiviral genes including IFNA and IFNB (PubMed:12702806, PubMed:15367631, PubMed:25636800, PubMed:32972995). In order to establish such an antiviral state, TBK1 form several different complexes whose composition depends on the type of cell and cellular stimuli (PubMed:23453971, PubMed:23453972, PubMed:23746807). Plays a key role in IRF3 activation: acts by first phosphorylating innate adapter proteins MAVS, STING1 and TICAM1 on their pLxIS motif, leading to recruitment of IRF3, thereby licensing IRF3 for phosphorylation by TBK1 (PubMed:25636800, PubMed:30842653, PubMed:37926288). Phosphorylated IRF3 dissociates from the adapter proteins, dimerizes, and then enters the nucleus to induce expression of interferons (PubMed:25636800). Thus, several scaffolding molecules including FADD, TRADD, MAVS, AZI2, TANK or TBKBP1/SINTBAD can be recruited to the TBK1-containing-complexes (PubMed:21931631). Under particular conditions, functions as a NF-kappa-B effector by phosphorylating NF-kappa-B inhibitor alpha/NFKBIA, IKBKB or RELA to translocate NF-Kappa-B to the nucleus (PubMed:10783893, PubMed:15489227). Restricts bacterial proliferation by phosphorylating the autophagy receptor OPTN/Optineurin on 'Ser-177', thus enhancing LC3 binding affinity and antibacterial autophagy (PubMed:21617041). Phosphorylates SMCR8 component of the C9orf72-SMCR8 complex, promoting autophagosome maturation (PubMed:27103069). Phosphorylates ATG8 proteins MAP1LC3C and GABARAPL2, thereby preventing their delipidation and premature removal from nascent autophagosomes (PubMed:31709703). Seems to play a role in energy balance regulation by sustaining a state of chronic, low-grade inflammation in obesity, which leads to a negative impact on insulin sensitivity (By similarity). Attenuates retroviral budding by phosphorylating the endosomal sorting complex required for transport-I (ESCRT-I) subunit VPS37C (PubMed:21270402). Phosphorylates Borna disease virus (BDV) P protein (PubMed:16155125). Plays an essential role in the TLR3- and IFN-dependent control of herpes virus HSV-1 and HSV-2 infections in the central nervous system (PubMed:22851595). Acts both as a positive and negative regulator of the mTORC1 complex, depending on the context: activates mTORC1 in response to growth factors by catalyzing phosphorylation of MTOR, while it limits the mTORC1 complex by promoting phosphorylation of RPTOR (PubMed:29150432, PubMed:31530866). Acts as a positive regulator of the mTORC2 complex by mediating phosphorylation of MTOR, leading to increased phosphorylation and activation of AKT1 (By similarity). Phosphorylates and activates AKT1 (PubMed:21464307). Involved in the regulation of TNF-induced RIPK1-mediated cell death, probably acting via CYLD phosphorylation that in turn controls RIPK1 ubiquitination status (PubMed:34363755). Also participates in the differentiation of T follicular regulatory cells together with the receptor ICOS (PubMed:27135603).</text>
</comment>
<comment type="catalytic activity">
    <reaction evidence="5 11 13 23 33 35 37 38 49 65 72 73">
        <text>L-seryl-[protein] + ATP = O-phospho-L-seryl-[protein] + ADP + H(+)</text>
        <dbReference type="Rhea" id="RHEA:17989"/>
        <dbReference type="Rhea" id="RHEA-COMP:9863"/>
        <dbReference type="Rhea" id="RHEA-COMP:11604"/>
        <dbReference type="ChEBI" id="CHEBI:15378"/>
        <dbReference type="ChEBI" id="CHEBI:29999"/>
        <dbReference type="ChEBI" id="CHEBI:30616"/>
        <dbReference type="ChEBI" id="CHEBI:83421"/>
        <dbReference type="ChEBI" id="CHEBI:456216"/>
        <dbReference type="EC" id="2.7.11.1"/>
    </reaction>
</comment>
<comment type="catalytic activity">
    <reaction evidence="5 11 13 23 33 35 37 38 49">
        <text>L-threonyl-[protein] + ATP = O-phospho-L-threonyl-[protein] + ADP + H(+)</text>
        <dbReference type="Rhea" id="RHEA:46608"/>
        <dbReference type="Rhea" id="RHEA-COMP:11060"/>
        <dbReference type="Rhea" id="RHEA-COMP:11605"/>
        <dbReference type="ChEBI" id="CHEBI:15378"/>
        <dbReference type="ChEBI" id="CHEBI:30013"/>
        <dbReference type="ChEBI" id="CHEBI:30616"/>
        <dbReference type="ChEBI" id="CHEBI:61977"/>
        <dbReference type="ChEBI" id="CHEBI:456216"/>
        <dbReference type="EC" id="2.7.11.1"/>
    </reaction>
</comment>
<comment type="subunit">
    <text evidence="4 9 10 11 12 19 20 24 27 28 29 30 31 34 39 40 45 49 50 54 56 59 63 66 68 69 70 71 74 75 76 77 78 83 88">Homodimer (PubMed:21145761, PubMed:37926288). Interacts with DDX3X, TIRAP and TRAF2 (PubMed:10581243, PubMed:14530355). Part of a ternary complex consisting of TANK, TRAF2 and TBK1 (PubMed:10581243). Interacts with AZI2, TANK and TBKBP1; these interactions are mutually exclusive and mediate TBK1 activation (PubMed:10581243, PubMed:14560022, PubMed:21931631, PubMed:23453972, PubMed:29251827). Interacts with GSK3B; this interaction promotes TBK1 self-association and autophosphorylation (PubMed:21145761). Interacts with SIKE1; SIKE1 is associated with TBK1 under physiological condition and dissociated from TBK1 upon viral infection or TLR3 stimulation (PubMed:16281057). Interacts with IRF3, leading to IRF3 phosphorylation (PubMed:14703513, PubMed:25636800, PubMed:37926288). Interacts with RIGI (PubMed:16281057). Interacts with CYLD (PubMed:18636086, PubMed:32185393). Interacts with OPTN and TRAF3 (PubMed:20174559). Interacts with SRC (PubMed:19419966). Interacts with the exocyst complex subunit SEC5/EXOC2; this interaction is sufficient to trigger TBK1 activity (PubMed:17018283). Interacts with STING1, leading to STING1 phosphorylation (PubMed:19416887, PubMed:25636800, PubMed:30842653). Interacts with IFIT3 (via N-terminus) (PubMed:21813773). Interacts with MAVS; interaction only takes place in the presence of IFIT3 and leads to MAVS phosphorylation (PubMed:21813773, PubMed:25636800, PubMed:28011935, PubMed:37926288). Interacts (via protein kinase domain) with TTLL12 (via TTL domain); the interaction prevents MAVS binding to TBK1 (PubMed:28011935). Interacts with TICAM1; this interaction is enhanced in the presence of WDFY1 and leads to TICAM1 phosphorylation (PubMed:14530355, PubMed:14739303, PubMed:25636800, PubMed:25736436). Interacts with TRIM26 (PubMed:26611359). Interacts with TRIM23 (PubMed:28871090). Interacts with TTC4 and IKBKE (PubMed:29251827). Interacts with HNRNPA2B1 (PubMed:31320558). Interacts with DDX3X (PubMed:20375222). Interacts with TRIM14 (PubMed:32404352). Interacts with CEP170; efficient complex formation may be dependent on the presence of CCDC61 (PubMed:30354798). Interacts with TRAF3IP3 (PubMed:32366851). Interacts with HSP90AA1; the interaction mediates TBK1 association with TOMM70 (PubMed:20628368). Interacts with TAX1BP1 (PubMed:33226137). Interacts with kinase IKBKB; the complex interacts with STAT1, leading to phosphorylation of STAT1 on 'Thr-749' by IKBKB (PubMed:32209697). Interacts with ICOS; this interaction is critical for the maturation of T follicular regulatory cells (PubMed:27135603). Interacts with RNF144B; this interaction prevents TBK1 phosphorylation and subsequent activation (PubMed:31509299). Interacts with ASB8; this interaction promotes TBK1 proteasomal degradation (PubMed:32298923). Forms a ternary complex with ZNF268 and SETD4; the interaction with SETD4 is ZNF268-dependent and leads to TBK1 monomethylation, which enhances its interaction with IRF3 and MAVS (PubMed:37926288).</text>
</comment>
<comment type="subunit">
    <text evidence="18">(Microbial infection) Interacts with Borna disease virus (BDV) P protein leading to its phosphorylation.</text>
</comment>
<comment type="subunit">
    <text evidence="26">(Microbial infection) Interacts with Ebola virus protein VP35.</text>
</comment>
<comment type="subunit">
    <text evidence="17">(Microbial infection) Interacts with HCV NS3; this interaction leads to inhibition of cellular antiviral response by blocking necessary interactions between the TBK1 and its substrates IRF3 and IRF7.</text>
</comment>
<comment type="subunit">
    <text evidence="25 64">(Microbial infection) Interacts with human herpesvirus 1 protein ICP34.5.</text>
</comment>
<comment type="subunit">
    <text evidence="60">(Microbial infection) Interacts with Zika virus non-structural protein 1/NS1 and non-structural protein 4B/NS4B.</text>
</comment>
<comment type="subunit">
    <text evidence="82 84">(Microbial infection) Interacts with SARS-CoV-2 non-structural protein 6; this interaction decreases IRF3 phosphorylation by 57%, which leads to reduced IFN-beta (IFNB) production (PubMed:32979938). Interacts with SARS-CoV-2 helicase; this interaction inhibits TBK1 phosphorylation and decreases IRF3 phosphorylation by 75%, which leads to reduced IFN-beta production (PubMed:32979938). Interacts with SARS-CoV-2 M protein; the interaction promotes TBK1 degradation via 'Lys-48'-linked ubiquitination (PubMed:34084167).</text>
</comment>
<comment type="subunit">
    <text evidence="80">(Microbial infection) Interacts with human cytomegalovirus protein UL35; this interaction inhibits type I interferon production.</text>
</comment>
<comment type="subunit">
    <text evidence="61 62">(Microbial infection) Interacts with heartland virus NSs; this interaction antagonizes TBK1 phosphorylation and inhibits TBK1-IRF3 interaction and thus the establishment of an antiviral state.</text>
</comment>
<comment type="subunit">
    <text evidence="47 48 61 67">(Microbial infection) Interacts (via N-terminus) with Severe fever with thrombocytopenia virus (SFTSV) NSs; this interaction antagonizes TBK1 phosphorylation and sequesters TBK1 in NSs-induced cytoplasmic inclusion bodies thereby inhibiting the IFN responses.</text>
</comment>
<comment type="interaction">
    <interactant intactId="EBI-356402">
        <id>Q9UHD2</id>
    </interactant>
    <interactant intactId="EBI-528269">
        <id>Q9UKV8</id>
        <label>AGO2</label>
    </interactant>
    <organismsDiffer>false</organismsDiffer>
    <experiments>2</experiments>
</comment>
<comment type="interaction">
    <interactant intactId="EBI-356402">
        <id>Q9UHD2</id>
    </interactant>
    <interactant intactId="EBI-727146">
        <id>Q7Z3C6</id>
        <label>ATG9A</label>
    </interactant>
    <organismsDiffer>false</organismsDiffer>
    <experiments>2</experiments>
</comment>
<comment type="interaction">
    <interactant intactId="EBI-356402">
        <id>Q9UHD2</id>
    </interactant>
    <interactant intactId="EBI-359973">
        <id>Q9H6S1</id>
        <label>AZI2</label>
    </interactant>
    <organismsDiffer>false</organismsDiffer>
    <experiments>7</experiments>
</comment>
<comment type="interaction">
    <interactant intactId="EBI-356402">
        <id>Q9UHD2</id>
    </interactant>
    <interactant intactId="EBI-739580">
        <id>Q13137</id>
        <label>CALCOCO2</label>
    </interactant>
    <organismsDiffer>false</organismsDiffer>
    <experiments>10</experiments>
</comment>
<comment type="interaction">
    <interactant intactId="EBI-356402">
        <id>Q9UHD2</id>
    </interactant>
    <interactant intactId="EBI-689124">
        <id>Q6DT37</id>
        <label>CDC42BPG</label>
    </interactant>
    <organismsDiffer>false</organismsDiffer>
    <experiments>3</experiments>
</comment>
<comment type="interaction">
    <interactant intactId="EBI-356402">
        <id>Q9UHD2</id>
    </interactant>
    <interactant intactId="EBI-352572">
        <id>P08238</id>
        <label>HSP90AB1</label>
    </interactant>
    <organismsDiffer>false</organismsDiffer>
    <experiments>2</experiments>
</comment>
<comment type="interaction">
    <interactant intactId="EBI-356402">
        <id>Q9UHD2</id>
    </interactant>
    <interactant intactId="EBI-3922712">
        <id>Q9Y6W8</id>
        <label>ICOS</label>
    </interactant>
    <organismsDiffer>false</organismsDiffer>
    <experiments>5</experiments>
</comment>
<comment type="interaction">
    <interactant intactId="EBI-356402">
        <id>Q9UHD2</id>
    </interactant>
    <interactant intactId="EBI-307369">
        <id>Q14164</id>
        <label>IKBKE</label>
    </interactant>
    <organismsDiffer>false</organismsDiffer>
    <experiments>5</experiments>
</comment>
<comment type="interaction">
    <interactant intactId="EBI-356402">
        <id>Q9UHD2</id>
    </interactant>
    <interactant intactId="EBI-81279">
        <id>Q9Y6K9</id>
        <label>IKBKG</label>
    </interactant>
    <organismsDiffer>false</organismsDiffer>
    <experiments>5</experiments>
</comment>
<comment type="interaction">
    <interactant intactId="EBI-356402">
        <id>Q9UHD2</id>
    </interactant>
    <interactant intactId="EBI-2650369">
        <id>Q14653</id>
        <label>IRF3</label>
    </interactant>
    <organismsDiffer>false</organismsDiffer>
    <experiments>10</experiments>
</comment>
<comment type="interaction">
    <interactant intactId="EBI-356402">
        <id>Q9UHD2</id>
    </interactant>
    <interactant intactId="EBI-968267">
        <id>Q92985</id>
        <label>IRF7</label>
    </interactant>
    <organismsDiffer>false</organismsDiffer>
    <experiments>2</experiments>
</comment>
<comment type="interaction">
    <interactant intactId="EBI-356402">
        <id>Q9UHD2</id>
    </interactant>
    <interactant intactId="EBI-720768">
        <id>Q9H492</id>
        <label>MAP1LC3A</label>
    </interactant>
    <organismsDiffer>false</organismsDiffer>
    <experiments>2</experiments>
</comment>
<comment type="interaction">
    <interactant intactId="EBI-356402">
        <id>Q9UHD2</id>
    </interactant>
    <interactant intactId="EBI-373144">
        <id>Q9GZQ8</id>
        <label>MAP1LC3B</label>
    </interactant>
    <organismsDiffer>false</organismsDiffer>
    <experiments>2</experiments>
</comment>
<comment type="interaction">
    <interactant intactId="EBI-356402">
        <id>Q9UHD2</id>
    </interactant>
    <interactant intactId="EBI-995373">
        <id>Q7Z434</id>
        <label>MAVS</label>
    </interactant>
    <organismsDiffer>false</organismsDiffer>
    <experiments>6</experiments>
</comment>
<comment type="interaction">
    <interactant intactId="EBI-356402">
        <id>Q9UHD2</id>
    </interactant>
    <interactant intactId="EBI-2129148">
        <id>Q86YT6</id>
        <label>MIB1</label>
    </interactant>
    <organismsDiffer>false</organismsDiffer>
    <experiments>2</experiments>
</comment>
<comment type="interaction">
    <interactant intactId="EBI-356402">
        <id>Q9UHD2</id>
    </interactant>
    <interactant intactId="EBI-2130249">
        <id>Q96AX9</id>
        <label>MIB2</label>
    </interactant>
    <organismsDiffer>false</organismsDiffer>
    <experiments>2</experiments>
</comment>
<comment type="interaction">
    <interactant intactId="EBI-356402">
        <id>Q9UHD2</id>
    </interactant>
    <interactant intactId="EBI-2556166">
        <id>Q9NVV4</id>
        <label>MTPAP</label>
    </interactant>
    <organismsDiffer>false</organismsDiffer>
    <experiments>2</experiments>
</comment>
<comment type="interaction">
    <interactant intactId="EBI-356402">
        <id>Q9UHD2</id>
    </interactant>
    <interactant intactId="EBI-748974">
        <id>Q96CV9</id>
        <label>OPTN</label>
    </interactant>
    <organismsDiffer>false</organismsDiffer>
    <experiments>17</experiments>
</comment>
<comment type="interaction">
    <interactant intactId="EBI-356402">
        <id>Q9UHD2</id>
    </interactant>
    <interactant intactId="EBI-1047061">
        <id>O14730</id>
        <label>RIOK3</label>
    </interactant>
    <organismsDiffer>false</organismsDiffer>
    <experiments>3</experiments>
</comment>
<comment type="interaction">
    <interactant intactId="EBI-356402">
        <id>Q9UHD2</id>
    </interactant>
    <interactant intactId="EBI-1186478">
        <id>P42226</id>
        <label>STAT6</label>
    </interactant>
    <organismsDiffer>false</organismsDiffer>
    <experiments>7</experiments>
</comment>
<comment type="interaction">
    <interactant intactId="EBI-356402">
        <id>Q9UHD2</id>
    </interactant>
    <interactant intactId="EBI-2800345">
        <id>Q86WV6</id>
        <label>STING1</label>
    </interactant>
    <organismsDiffer>false</organismsDiffer>
    <experiments>9</experiments>
</comment>
<comment type="interaction">
    <interactant intactId="EBI-356402">
        <id>Q9UHD2</id>
    </interactant>
    <interactant intactId="EBI-714135">
        <id>O75558</id>
        <label>STX11</label>
    </interactant>
    <organismsDiffer>false</organismsDiffer>
    <experiments>4</experiments>
</comment>
<comment type="interaction">
    <interactant intactId="EBI-356402">
        <id>Q9UHD2</id>
    </interactant>
    <interactant intactId="EBI-356349">
        <id>Q92844</id>
        <label>TANK</label>
    </interactant>
    <organismsDiffer>false</organismsDiffer>
    <experiments>14</experiments>
</comment>
<comment type="interaction">
    <interactant intactId="EBI-356402">
        <id>Q9UHD2</id>
    </interactant>
    <interactant intactId="EBI-359969">
        <id>A7MCY6</id>
        <label>TBKBP1</label>
    </interactant>
    <organismsDiffer>false</organismsDiffer>
    <experiments>9</experiments>
</comment>
<comment type="interaction">
    <interactant intactId="EBI-356402">
        <id>Q9UHD2</id>
    </interactant>
    <interactant intactId="EBI-525995">
        <id>Q8IUC6</id>
        <label>TICAM1</label>
    </interactant>
    <organismsDiffer>false</organismsDiffer>
    <experiments>3</experiments>
</comment>
<comment type="interaction">
    <interactant intactId="EBI-356402">
        <id>Q9UHD2</id>
    </interactant>
    <interactant intactId="EBI-355744">
        <id>Q12933</id>
        <label>TRAF2</label>
    </interactant>
    <organismsDiffer>false</organismsDiffer>
    <experiments>9</experiments>
</comment>
<comment type="interaction">
    <interactant intactId="EBI-356402">
        <id>Q9UHD2</id>
    </interactant>
    <interactant intactId="EBI-357631">
        <id>Q13114</id>
        <label>TRAF3</label>
    </interactant>
    <organismsDiffer>false</organismsDiffer>
    <experiments>4</experiments>
</comment>
<comment type="interaction">
    <interactant intactId="EBI-356402">
        <id>Q9UHD2</id>
    </interactant>
    <interactant intactId="EBI-1050890">
        <id>O95801</id>
        <label>TTC4</label>
    </interactant>
    <organismsDiffer>false</organismsDiffer>
    <experiments>5</experiments>
</comment>
<comment type="interaction">
    <interactant intactId="EBI-356402">
        <id>Q9UHD2</id>
    </interactant>
    <interactant intactId="EBI-359793">
        <id>P40222</id>
        <label>TXLNA</label>
    </interactant>
    <organismsDiffer>false</organismsDiffer>
    <experiments>8</experiments>
</comment>
<comment type="interaction">
    <interactant intactId="EBI-356402">
        <id>Q9UHD2</id>
    </interactant>
    <interactant intactId="EBI-773173">
        <id>Q62167</id>
        <label>Ddx3x</label>
    </interactant>
    <organismsDiffer>true</organismsDiffer>
    <experiments>8</experiments>
</comment>
<comment type="interaction">
    <interactant intactId="EBI-356402">
        <id>Q9UHD2</id>
    </interactant>
    <interactant intactId="EBI-9544132">
        <id>O41932</id>
        <label>GAMMAHV.ORF11</label>
    </interactant>
    <organismsDiffer>true</organismsDiffer>
    <experiments>4</experiments>
</comment>
<comment type="interaction">
    <interactant intactId="EBI-356402">
        <id>Q9UHD2</id>
    </interactant>
    <interactant intactId="EBI-25475853">
        <id>P0DTC5</id>
        <label>M</label>
    </interactant>
    <organismsDiffer>true</organismsDiffer>
    <experiments>10</experiments>
</comment>
<comment type="interaction">
    <interactant intactId="EBI-356402">
        <id>Q9UHD2</id>
    </interactant>
    <interactant intactId="EBI-25487824">
        <id>P59596</id>
        <label>M</label>
    </interactant>
    <organismsDiffer>true</organismsDiffer>
    <experiments>5</experiments>
</comment>
<comment type="interaction">
    <interactant intactId="EBI-356402">
        <id>Q9UHD2</id>
    </interactant>
    <interactant intactId="EBI-9543922">
        <id>W5VXH5</id>
        <label>NSs</label>
    </interactant>
    <organismsDiffer>true</organismsDiffer>
    <experiments>3</experiments>
</comment>
<comment type="interaction">
    <interactant intactId="EBI-356402">
        <id>Q9UHD2</id>
    </interactant>
    <interactant intactId="EBI-25475888">
        <id>PRO_0000449630</id>
        <label>rep</label>
        <dbReference type="UniProtKB" id="P0DTD1"/>
    </interactant>
    <organismsDiffer>true</organismsDiffer>
    <experiments>6</experiments>
</comment>
<comment type="interaction">
    <interactant intactId="EBI-356402">
        <id>Q9UHD2</id>
    </interactant>
    <interactant intactId="EBI-520135">
        <id>Q60803</id>
        <label>Traf3</label>
    </interactant>
    <organismsDiffer>true</organismsDiffer>
    <experiments>2</experiments>
</comment>
<comment type="interaction">
    <interactant intactId="EBI-356402">
        <id>Q9UHD2</id>
    </interactant>
    <interactant intactId="EBI-6116854">
        <id>Q8BHN1</id>
        <label>Txlng</label>
    </interactant>
    <organismsDiffer>true</organismsDiffer>
    <experiments>2</experiments>
</comment>
<comment type="interaction">
    <interactant intactId="EBI-356402">
        <id>Q9UHD2</id>
    </interactant>
    <interactant intactId="EBI-6148294">
        <id>Q05127</id>
        <label>VP35</label>
    </interactant>
    <organismsDiffer>true</organismsDiffer>
    <experiments>2</experiments>
</comment>
<comment type="interaction">
    <interactant intactId="EBI-356402">
        <id>Q9UHD2</id>
    </interactant>
    <interactant intactId="EBI-9518472">
        <id>I6W9F2</id>
    </interactant>
    <organismsDiffer>true</organismsDiffer>
    <experiments>6</experiments>
</comment>
<comment type="interaction">
    <interactant intactId="EBI-356402">
        <id>Q9UHD2</id>
    </interactant>
    <interactant intactId="EBI-8788634">
        <id>K7Y1A2</id>
    </interactant>
    <organismsDiffer>true</organismsDiffer>
    <experiments>2</experiments>
</comment>
<comment type="interaction">
    <interactant intactId="EBI-356402">
        <id>Q9UHD2</id>
    </interactant>
    <interactant intactId="EBI-6919131">
        <id>PRO_0000037572</id>
        <dbReference type="UniProtKB" id="P27958"/>
    </interactant>
    <organismsDiffer>true</organismsDiffer>
    <experiments>2</experiments>
</comment>
<comment type="interaction">
    <interactant intactId="EBI-356402">
        <id>Q9UHD2</id>
    </interactant>
    <interactant intactId="EBI-3649474">
        <id>PRO_0000037573</id>
        <dbReference type="UniProtKB" id="P27958"/>
    </interactant>
    <organismsDiffer>true</organismsDiffer>
    <experiments>4</experiments>
</comment>
<comment type="subcellular location">
    <subcellularLocation>
        <location evidence="14 39 66 76">Cytoplasm</location>
    </subcellularLocation>
    <text evidence="20">Upon mitogen stimulation or triggering of the immune system, TBK1 is recruited to the exocyst by EXOC2.</text>
</comment>
<comment type="tissue specificity">
    <text evidence="5 36">Ubiquitous with higher expression in testis. Expressed in the ganglion cells, nerve fiber layer and microvasculature of the retina.</text>
</comment>
<comment type="domain">
    <text evidence="22 32">Comprises A N-terminal kinase domain, a ubiquitin-like domain and a C-terminal coiled-coil region mediating homodimerization.</text>
</comment>
<comment type="PTM">
    <text evidence="6 33 44 46">Autophosphorylation at Ser-172 activates the kinase, and is an essential step for virus-triggered signaling. Phosphorylated by IKBKB/IKKB at Ser-172. Phosphorylation requires homodimerization and ubiquitination at Lys-30 and Lys-401. Dephosphorylated at Ser-172 by PPM1B and this negatively regulates its role in mediating antiviral response.</text>
</comment>
<comment type="PTM">
    <text evidence="42 44 57 58 77 87">'Lys-63'-linked polyubiquitination by MIB1 after RNA virus infection, or by NRDP1 after LPS stimulation at Lys-30 and Lys-401, participates in kinase activation. 'Lys-48'-linked polyubiquitination at Lys-670 by DTX4 leads to proteasomal degradation. 'Lys-48'-linked polyubiquitination by TRAIP also leads to proteasomal degradation. 'Lys-48'-linked polyubiquitination by TRAF7; leading to proteasomal degradation (PubMed:37086853). 'Lys-63'-linked polyubiquitination by RNF128 at Lys-30 and Lys-401 leads to the activation of antiviral responses. 'Lys-48'-linked polyubiquitination after 'lys-33'-linked deubiquitination by USP38 promotes TBK1 degradation (PubMed:27692986).</text>
</comment>
<comment type="PTM">
    <text evidence="84">(Microbial infection) Interaction with SARS-CoV-2 M protein induces 'Lys-48'-linked ubiquitination which leads to proteasomal degradation.</text>
</comment>
<comment type="PTM">
    <text evidence="86">(Microbial infection) Deubiquitinated by Epstein-Barr virus BPLF1 on both 'Lys-48' and 'Lys-63'-linked ubiquitin chains; leading to inhibition of type I interfewron production.</text>
</comment>
<comment type="PTM">
    <text evidence="88">Monomethylation at Lys-607 by SETD4 maximizes TBK1 activation and promotes efficient interferon signaling.</text>
</comment>
<comment type="disease" evidence="36 41">
    <disease id="DI-03709">
        <name>Glaucoma 1, open angle, P</name>
        <acronym>GLC1P</acronym>
        <description>A form of primary open angle glaucoma (POAG). POAG is characterized by a specific pattern of optic nerve and visual field defects. The angle of the anterior chamber of the eye is open, and usually the intraocular pressure is increased. However, glaucoma can occur at any intraocular pressure. The disease is generally asymptomatic until the late stages, by which time significant and irreversible optic nerve damage has already taken place. GLC1P is characterized by early onset, thin central corneas and low intraocular pressure.</description>
        <dbReference type="MIM" id="177700"/>
    </disease>
    <text evidence="36">The disease may be caused by variants affecting the gene represented in this entry. A copy number variation on chromosome 12q14 consisting of a 300 kb duplication that includes TBK1, XPOT, RASSF3 and GNS has been found in individuals affected by glaucoma. TBK1 is the most likely candidate for the disorder (PubMed:21447600).</text>
</comment>
<comment type="disease" evidence="51 52">
    <disease id="DI-04472">
        <name>Frontotemporal dementia and/or amyotrophic lateral sclerosis 4</name>
        <acronym>FTDALS4</acronym>
        <description>A neurodegenerative disorder characterized by frontotemporal dementia and/or amyotrophic lateral sclerosis in affected individuals. There is high intrafamilial variation. Frontotemporal dementia is characterized by frontal and temporal lobe atrophy associated with neuronal loss, gliosis, and dementia. Patients exhibit progressive changes in social, behavioral, and/or language function. Amyotrophic lateral sclerosis is characterized by the death of motor neurons in the brain, brainstem, and spinal cord, resulting in fatal paralysis.</description>
        <dbReference type="MIM" id="616439"/>
    </disease>
    <text>The disease is caused by variants affecting the gene represented in this entry.</text>
</comment>
<comment type="disease" evidence="43 53">
    <disease id="DI-05212">
        <name>Encephalopathy, acute, infection-induced, 8, herpes-specific</name>
        <acronym>IIAE8</acronym>
        <description>A rare, often fatal complication of herpes simplex infection, caused by virus spreading in the central nervous system. Disease manifestations include low-grade fever, severe headache, nausea, vomiting, and lethargy. Neurological features include confusion, acute memory disturbances, disorientation, behavioral changes, hemiparesis and seizures.</description>
        <dbReference type="MIM" id="617900"/>
    </disease>
    <text>Disease susceptibility is associated with variants affecting the gene represented in this entry.</text>
</comment>
<comment type="disease" evidence="79 85">
    <disease id="DI-06922">
        <name>Autoinflammation with arthritis and vasculitis</name>
        <acronym>AIARV</acronym>
        <description>An autosomal recessive disorder characterized by onset of chronic and systemic autoinflammation in infancy or early childhood. Affected individuals have recurrent fever, erythematous skin rashes, vasculitis, oral aphthous lesions, and polyarthritis. Additional variable features are poor overall growth, microcytic anemia, mild intellectual disability, and seizures.</description>
        <dbReference type="MIM" id="620880"/>
    </disease>
    <text>The disease is caused by variants affecting the gene represented in this entry.</text>
</comment>
<comment type="miscellaneous">
    <text evidence="92">In cancer cells, pathological TBK1 activation promotes oncogenic transformation by suppressing programmed cell death. Mechanistically, the RALB-SEC5/EXOC2-TBK1 signaling cascade seems to participate in both innate immune signaling and cell transformation. Additionally, TBK1 supports oncogenesis by directly phosphorylating and activating AKT1 at the exocyst (PubMed:21042276).</text>
</comment>
<comment type="similarity">
    <text evidence="3">Belongs to the protein kinase superfamily. Ser/Thr protein kinase family. I-kappa-B kinase subfamily.</text>
</comment>
<comment type="sequence caution" evidence="91">
    <conflict type="erroneous initiation">
        <sequence resource="EMBL-CDS" id="BAA92129"/>
    </conflict>
    <text>Truncated N-terminus.</text>
</comment>
<proteinExistence type="evidence at protein level"/>
<reference key="1">
    <citation type="journal article" date="1999" name="EMBO J.">
        <title>NF-kB activation by a signaling complex containing TRAF2, TANK, and TBK1, a novel IKK-related kinase.</title>
        <authorList>
            <person name="Pomerantz J.L."/>
            <person name="Baltimore D."/>
        </authorList>
    </citation>
    <scope>NUCLEOTIDE SEQUENCE [MRNA]</scope>
    <scope>FUNCTION</scope>
    <scope>INTERACTION WITH TANK AND TRAF2</scope>
    <scope>MUTAGENESIS OF LYS-38</scope>
    <source>
        <tissue>Spleen</tissue>
    </source>
</reference>
<reference key="2">
    <citation type="journal article" date="2000" name="Nature">
        <title>NAK is an IkappaB kinase-activating kinase.</title>
        <authorList>
            <person name="Tojima Y."/>
            <person name="Fujimoto A."/>
            <person name="Delhase M."/>
            <person name="Chen Y."/>
            <person name="Hatakeyama S."/>
            <person name="Nakayama K."/>
            <person name="Kaneko Y."/>
            <person name="Nimura Y."/>
            <person name="Motoyama N."/>
            <person name="Ikeda K."/>
            <person name="Karin M."/>
            <person name="Nakanishi M."/>
        </authorList>
    </citation>
    <scope>NUCLEOTIDE SEQUENCE [MRNA]</scope>
    <scope>FUNCTION IN PHOSPHORYLATION OF NFKBIA AND IKBKB</scope>
    <scope>TISSUE SPECIFICITY</scope>
    <scope>CATALYTIC ACTIVITY</scope>
</reference>
<reference key="3">
    <citation type="journal article" date="2004" name="Nat. Genet.">
        <title>Complete sequencing and characterization of 21,243 full-length human cDNAs.</title>
        <authorList>
            <person name="Ota T."/>
            <person name="Suzuki Y."/>
            <person name="Nishikawa T."/>
            <person name="Otsuki T."/>
            <person name="Sugiyama T."/>
            <person name="Irie R."/>
            <person name="Wakamatsu A."/>
            <person name="Hayashi K."/>
            <person name="Sato H."/>
            <person name="Nagai K."/>
            <person name="Kimura K."/>
            <person name="Makita H."/>
            <person name="Sekine M."/>
            <person name="Obayashi M."/>
            <person name="Nishi T."/>
            <person name="Shibahara T."/>
            <person name="Tanaka T."/>
            <person name="Ishii S."/>
            <person name="Yamamoto J."/>
            <person name="Saito K."/>
            <person name="Kawai Y."/>
            <person name="Isono Y."/>
            <person name="Nakamura Y."/>
            <person name="Nagahari K."/>
            <person name="Murakami K."/>
            <person name="Yasuda T."/>
            <person name="Iwayanagi T."/>
            <person name="Wagatsuma M."/>
            <person name="Shiratori A."/>
            <person name="Sudo H."/>
            <person name="Hosoiri T."/>
            <person name="Kaku Y."/>
            <person name="Kodaira H."/>
            <person name="Kondo H."/>
            <person name="Sugawara M."/>
            <person name="Takahashi M."/>
            <person name="Kanda K."/>
            <person name="Yokoi T."/>
            <person name="Furuya T."/>
            <person name="Kikkawa E."/>
            <person name="Omura Y."/>
            <person name="Abe K."/>
            <person name="Kamihara K."/>
            <person name="Katsuta N."/>
            <person name="Sato K."/>
            <person name="Tanikawa M."/>
            <person name="Yamazaki M."/>
            <person name="Ninomiya K."/>
            <person name="Ishibashi T."/>
            <person name="Yamashita H."/>
            <person name="Murakawa K."/>
            <person name="Fujimori K."/>
            <person name="Tanai H."/>
            <person name="Kimata M."/>
            <person name="Watanabe M."/>
            <person name="Hiraoka S."/>
            <person name="Chiba Y."/>
            <person name="Ishida S."/>
            <person name="Ono Y."/>
            <person name="Takiguchi S."/>
            <person name="Watanabe S."/>
            <person name="Yosida M."/>
            <person name="Hotuta T."/>
            <person name="Kusano J."/>
            <person name="Kanehori K."/>
            <person name="Takahashi-Fujii A."/>
            <person name="Hara H."/>
            <person name="Tanase T.-O."/>
            <person name="Nomura Y."/>
            <person name="Togiya S."/>
            <person name="Komai F."/>
            <person name="Hara R."/>
            <person name="Takeuchi K."/>
            <person name="Arita M."/>
            <person name="Imose N."/>
            <person name="Musashino K."/>
            <person name="Yuuki H."/>
            <person name="Oshima A."/>
            <person name="Sasaki N."/>
            <person name="Aotsuka S."/>
            <person name="Yoshikawa Y."/>
            <person name="Matsunawa H."/>
            <person name="Ichihara T."/>
            <person name="Shiohata N."/>
            <person name="Sano S."/>
            <person name="Moriya S."/>
            <person name="Momiyama H."/>
            <person name="Satoh N."/>
            <person name="Takami S."/>
            <person name="Terashima Y."/>
            <person name="Suzuki O."/>
            <person name="Nakagawa S."/>
            <person name="Senoh A."/>
            <person name="Mizoguchi H."/>
            <person name="Goto Y."/>
            <person name="Shimizu F."/>
            <person name="Wakebe H."/>
            <person name="Hishigaki H."/>
            <person name="Watanabe T."/>
            <person name="Sugiyama A."/>
            <person name="Takemoto M."/>
            <person name="Kawakami B."/>
            <person name="Yamazaki M."/>
            <person name="Watanabe K."/>
            <person name="Kumagai A."/>
            <person name="Itakura S."/>
            <person name="Fukuzumi Y."/>
            <person name="Fujimori Y."/>
            <person name="Komiyama M."/>
            <person name="Tashiro H."/>
            <person name="Tanigami A."/>
            <person name="Fujiwara T."/>
            <person name="Ono T."/>
            <person name="Yamada K."/>
            <person name="Fujii Y."/>
            <person name="Ozaki K."/>
            <person name="Hirao M."/>
            <person name="Ohmori Y."/>
            <person name="Kawabata A."/>
            <person name="Hikiji T."/>
            <person name="Kobatake N."/>
            <person name="Inagaki H."/>
            <person name="Ikema Y."/>
            <person name="Okamoto S."/>
            <person name="Okitani R."/>
            <person name="Kawakami T."/>
            <person name="Noguchi S."/>
            <person name="Itoh T."/>
            <person name="Shigeta K."/>
            <person name="Senba T."/>
            <person name="Matsumura K."/>
            <person name="Nakajima Y."/>
            <person name="Mizuno T."/>
            <person name="Morinaga M."/>
            <person name="Sasaki M."/>
            <person name="Togashi T."/>
            <person name="Oyama M."/>
            <person name="Hata H."/>
            <person name="Watanabe M."/>
            <person name="Komatsu T."/>
            <person name="Mizushima-Sugano J."/>
            <person name="Satoh T."/>
            <person name="Shirai Y."/>
            <person name="Takahashi Y."/>
            <person name="Nakagawa K."/>
            <person name="Okumura K."/>
            <person name="Nagase T."/>
            <person name="Nomura N."/>
            <person name="Kikuchi H."/>
            <person name="Masuho Y."/>
            <person name="Yamashita R."/>
            <person name="Nakai K."/>
            <person name="Yada T."/>
            <person name="Nakamura Y."/>
            <person name="Ohara O."/>
            <person name="Isogai T."/>
            <person name="Sugano S."/>
        </authorList>
    </citation>
    <scope>NUCLEOTIDE SEQUENCE [LARGE SCALE MRNA]</scope>
    <source>
        <tissue>Placenta</tissue>
    </source>
</reference>
<reference key="4">
    <citation type="submission" date="2005-07" db="EMBL/GenBank/DDBJ databases">
        <authorList>
            <person name="Mural R.J."/>
            <person name="Istrail S."/>
            <person name="Sutton G.G."/>
            <person name="Florea L."/>
            <person name="Halpern A.L."/>
            <person name="Mobarry C.M."/>
            <person name="Lippert R."/>
            <person name="Walenz B."/>
            <person name="Shatkay H."/>
            <person name="Dew I."/>
            <person name="Miller J.R."/>
            <person name="Flanigan M.J."/>
            <person name="Edwards N.J."/>
            <person name="Bolanos R."/>
            <person name="Fasulo D."/>
            <person name="Halldorsson B.V."/>
            <person name="Hannenhalli S."/>
            <person name="Turner R."/>
            <person name="Yooseph S."/>
            <person name="Lu F."/>
            <person name="Nusskern D.R."/>
            <person name="Shue B.C."/>
            <person name="Zheng X.H."/>
            <person name="Zhong F."/>
            <person name="Delcher A.L."/>
            <person name="Huson D.H."/>
            <person name="Kravitz S.A."/>
            <person name="Mouchard L."/>
            <person name="Reinert K."/>
            <person name="Remington K.A."/>
            <person name="Clark A.G."/>
            <person name="Waterman M.S."/>
            <person name="Eichler E.E."/>
            <person name="Adams M.D."/>
            <person name="Hunkapiller M.W."/>
            <person name="Myers E.W."/>
            <person name="Venter J.C."/>
        </authorList>
    </citation>
    <scope>NUCLEOTIDE SEQUENCE [LARGE SCALE GENOMIC DNA]</scope>
</reference>
<reference key="5">
    <citation type="journal article" date="2004" name="Genome Res.">
        <title>The status, quality, and expansion of the NIH full-length cDNA project: the Mammalian Gene Collection (MGC).</title>
        <authorList>
            <consortium name="The MGC Project Team"/>
        </authorList>
    </citation>
    <scope>NUCLEOTIDE SEQUENCE [LARGE SCALE MRNA]</scope>
    <scope>VARIANTS ASP-388 AND GLN-570</scope>
    <source>
        <tissue>Testis</tissue>
    </source>
</reference>
<reference key="6">
    <citation type="journal article" date="2002" name="J. Biol. Chem.">
        <title>IKK-i and TBK-1 are enzymatically distinct from the homologous enzyme IKK-2: comparative analysis of recombinant human IKK-i, TBK-1, and IKK-2.</title>
        <authorList>
            <person name="Kishore N."/>
            <person name="Huynh Q.K."/>
            <person name="Mathialagan S."/>
            <person name="Hall T."/>
            <person name="Rouw S."/>
            <person name="Creely D."/>
            <person name="Lange G."/>
            <person name="Caroll J."/>
            <person name="Reitz B."/>
            <person name="Donnelly A."/>
            <person name="Boddupalli H."/>
            <person name="Combs R.G."/>
            <person name="Kretzmer K."/>
            <person name="Tripp C.S."/>
        </authorList>
    </citation>
    <scope>FUNCTION</scope>
    <scope>MUTAGENESIS OF SER-172</scope>
    <scope>PHOSPHORYLATION AT SER-172</scope>
</reference>
<reference key="7">
    <citation type="journal article" date="2003" name="J. Immunol.">
        <title>Toll/IL-1 receptor domain-containing adapter inducing IFN-beta (TRIF) associates with TNF receptor-associated factor 6 and TANK-binding kinase 1, and activates two distinct transcription factors, NF-kappa B and IFN-regulatory factor-3, in the Toll-like receptor signaling.</title>
        <authorList>
            <person name="Sato S."/>
            <person name="Sugiyama M."/>
            <person name="Yamamoto M."/>
            <person name="Watanabe Y."/>
            <person name="Kawai T."/>
            <person name="Takeda K."/>
            <person name="Akira S."/>
        </authorList>
    </citation>
    <scope>INTERACTION WITH TIRAP AND TICAM1</scope>
</reference>
<reference key="8">
    <citation type="journal article" date="2003" name="Nat. Immunol.">
        <title>IKKepsilon and TBK1 are essential components of the IRF3 signaling pathway.</title>
        <authorList>
            <person name="Fitzgerald K.A."/>
            <person name="McWhirter S.M."/>
            <person name="Faia K.L."/>
            <person name="Rowe D.C."/>
            <person name="Latz E."/>
            <person name="Golenbock D.T."/>
            <person name="Coyle A.J."/>
            <person name="Liao S.-M."/>
            <person name="Maniatis T."/>
        </authorList>
    </citation>
    <scope>FUNCTION</scope>
</reference>
<reference key="9">
    <citation type="journal article" date="2003" name="Science">
        <title>Triggering the interferon antiviral response through an IKK-related pathway.</title>
        <authorList>
            <person name="Sharma S."/>
            <person name="tenOever B.R."/>
            <person name="Grandvaux N."/>
            <person name="Zhou G.-P."/>
            <person name="Lin R."/>
            <person name="Hiscott J."/>
        </authorList>
    </citation>
    <scope>FUNCTION</scope>
</reference>
<reference key="10">
    <citation type="journal article" date="2003" name="Mol. Cell. Biol.">
        <title>Identification of NAP1, a regulatory subunit of IkappaB kinase-related kinases that potentiates NF-kappaB signaling.</title>
        <authorList>
            <person name="Fujita F."/>
            <person name="Taniguchi Y."/>
            <person name="Kato T."/>
            <person name="Narita Y."/>
            <person name="Furuya A."/>
            <person name="Ogawa T."/>
            <person name="Sakurai H."/>
            <person name="Joh T."/>
            <person name="Itoh M."/>
            <person name="Delhase M."/>
            <person name="Karin M."/>
            <person name="Nakanishi M."/>
        </authorList>
    </citation>
    <scope>INTERACTION WITH AZI2</scope>
</reference>
<reference key="11">
    <citation type="journal article" date="2004" name="J. Biol. Chem.">
        <title>Identification of Ser-386 of interferon regulatory factor 3 as critical target for inducible phosphorylation that determines activation.</title>
        <authorList>
            <person name="Mori M."/>
            <person name="Yoneyama M."/>
            <person name="Ito T."/>
            <person name="Takahashi K."/>
            <person name="Inagaki F."/>
            <person name="Fujita T."/>
        </authorList>
    </citation>
    <scope>FUNCTION IN PHOSPHORYLATION OF IRF3</scope>
    <scope>CATALYTIC ACTIVITY</scope>
</reference>
<reference key="12">
    <citation type="journal article" date="2004" name="J. Biol. Chem.">
        <title>Mechanisms of the TRIF-induced interferon-stimulated response element and NF-kappaB activation and apoptosis pathways.</title>
        <authorList>
            <person name="Han K.J."/>
            <person name="Su X."/>
            <person name="Xu L.-G."/>
            <person name="Bin L.H."/>
            <person name="Zhang J."/>
            <person name="Shu H.-B."/>
        </authorList>
    </citation>
    <scope>INTERACTION WITH TICAM1</scope>
</reference>
<reference key="13">
    <citation type="journal article" date="2004" name="J. Biol. Chem.">
        <title>NAK is recruited to the TNFR1 complex in a TNFalpha-dependent manner and mediates the production of RANTES: identification of endogenous TNFR-interacting proteins by a proteomic approach.</title>
        <authorList>
            <person name="Kuai J."/>
            <person name="Wooters J."/>
            <person name="Hall J.P."/>
            <person name="Rao V.R."/>
            <person name="Nickbarg E."/>
            <person name="Li B."/>
            <person name="Chatterjee-Kishore M."/>
            <person name="Qiu Y."/>
            <person name="Lin L.-L."/>
        </authorList>
    </citation>
    <scope>FUNCTION</scope>
    <scope>SUBCELLULAR LOCATION</scope>
</reference>
<reference key="14">
    <citation type="journal article" date="2004" name="J. Biol. Chem.">
        <title>Constitutive and interleukin-1-inducible phosphorylation of p65 NF-{kappa}B at serine 536 is mediated by multiple protein kinases including I{kappa}B kinase (IKK)-{alpha}, IKK{beta}, IKK{epsilon}, TRAF family member-associated (TANK)-binding kinase 1 (TBK1), and an unknown kinase and couples p65 to TATA-binding protein-associated factor II31-mediated interleukin-8 transcription.</title>
        <authorList>
            <person name="Buss H."/>
            <person name="Dorrie A."/>
            <person name="Schmitz M.L."/>
            <person name="Hoffmann E."/>
            <person name="Resch K."/>
            <person name="Kracht M."/>
        </authorList>
    </citation>
    <scope>FUNCTION IN PHOSPHORYLATION OF RELA</scope>
    <scope>CATALYTIC ACTIVITY</scope>
</reference>
<reference key="15">
    <citation type="journal article" date="2004" name="J. Virol.">
        <title>Activation of TBK1 and IKKvarepsilon kinases by vesicular stomatitis virus infection and the role of viral ribonucleoprotein in the development of interferon antiviral immunity.</title>
        <authorList>
            <person name="tenOever B.R."/>
            <person name="Sharma S."/>
            <person name="Zou W."/>
            <person name="Sun Q."/>
            <person name="Grandvaux N."/>
            <person name="Julkunen I."/>
            <person name="Hemmi H."/>
            <person name="Yamamoto M."/>
            <person name="Akira S."/>
            <person name="Yeh W.C."/>
            <person name="Lin R."/>
            <person name="Hiscott J."/>
        </authorList>
    </citation>
    <scope>FUNCTION IN PHOSPHORYLATION OF IRF7</scope>
    <scope>CATALYTIC ACTIVITY</scope>
</reference>
<reference key="16">
    <citation type="journal article" date="2005" name="EMBO J.">
        <title>SIKE is an IKK epsilon/TBK1-associated suppressor of TLR3- and virus-triggered IRF-3 activation pathways.</title>
        <authorList>
            <person name="Huang J."/>
            <person name="Liu T."/>
            <person name="Xu L.-G."/>
            <person name="Chen D."/>
            <person name="Zhai Z."/>
            <person name="Shu H.-B."/>
        </authorList>
    </citation>
    <scope>INTERACTION WITH SIKE1; IRF3; TICAM1 AND RIGI</scope>
</reference>
<reference key="17">
    <citation type="journal article" date="2005" name="Hepatology">
        <title>Interaction between the HCV NS3 protein and the host TBK1 protein leads to inhibition of cellular antiviral responses.</title>
        <authorList>
            <person name="Otsuka M."/>
            <person name="Kato N."/>
            <person name="Moriyama M."/>
            <person name="Taniguchi H."/>
            <person name="Wang Y."/>
            <person name="Dharel N."/>
            <person name="Kawabe T."/>
            <person name="Omata M."/>
        </authorList>
    </citation>
    <scope>INTERACTION WITH HCV NS3 (MICROBIAL INFECTION)</scope>
</reference>
<reference key="18">
    <citation type="journal article" date="2005" name="Proc. Natl. Acad. Sci. U.S.A.">
        <title>Viral targeting of the interferon-beta-inducing Traf family member-associated NF-kappa-B activator (TANK)-binding kinase-1.</title>
        <authorList>
            <person name="Unterstab G."/>
            <person name="Ludwig S."/>
            <person name="Anton A."/>
            <person name="Planz O."/>
            <person name="Dauber B."/>
            <person name="Krappmann D."/>
            <person name="Heins G."/>
            <person name="Ehrhardt C."/>
            <person name="Wolff T."/>
        </authorList>
    </citation>
    <scope>FUNCTION</scope>
    <scope>INTERACTION WITH BORNA DISEASE VIRUS P PROTEIN</scope>
</reference>
<reference key="19">
    <citation type="journal article" date="2006" name="Cell">
        <title>RalB GTPase-mediated activation of the IkappaB family kinase TBK1 couples innate immune signaling to tumor cell survival.</title>
        <authorList>
            <person name="Chien Y."/>
            <person name="Kim S."/>
            <person name="Bumeister R."/>
            <person name="Loo Y.M."/>
            <person name="Kwon S.W."/>
            <person name="Johnson C.L."/>
            <person name="Balakireva M.G."/>
            <person name="Romeo Y."/>
            <person name="Kopelovich L."/>
            <person name="Gale M. Jr."/>
            <person name="Yeaman C."/>
            <person name="Camonis J.H."/>
            <person name="Zhao Y."/>
            <person name="White M.A."/>
        </authorList>
    </citation>
    <scope>INTERACTION WITH EXOC2</scope>
    <scope>SUBCELLULAR LOCATION</scope>
</reference>
<reference key="20">
    <citation type="journal article" date="2007" name="EMBO J.">
        <title>Involvement of the ubiquitin-like domain of TBK1/IKK-i kinases in regulation of IFN-inducible genes.</title>
        <authorList>
            <person name="Ikeda F."/>
            <person name="Hecker C.M."/>
            <person name="Rozenknop A."/>
            <person name="Nordmeier R.D."/>
            <person name="Rogov V."/>
            <person name="Hofmann K."/>
            <person name="Akira S."/>
            <person name="Dotsch V."/>
            <person name="Dikic I."/>
        </authorList>
    </citation>
    <scope>DOMAIN</scope>
</reference>
<reference key="21">
    <citation type="journal article" date="2008" name="EMBO J.">
        <title>The DEAD-box helicase DDX3X is a critical component of the TANK-binding kinase 1-dependent innate immune response.</title>
        <authorList>
            <person name="Soulat D."/>
            <person name="Burckstummer T."/>
            <person name="Westermayer S."/>
            <person name="Goncalves A."/>
            <person name="Bauch A."/>
            <person name="Stefanovic A."/>
            <person name="Hantschel O."/>
            <person name="Bennett K.L."/>
            <person name="Decker T."/>
            <person name="Superti-Furga G."/>
        </authorList>
    </citation>
    <scope>FUNCTION IN PHOSPHORYLATION OF DDX3X</scope>
    <scope>CATALYTIC ACTIVITY</scope>
</reference>
<reference key="22">
    <citation type="journal article" date="2008" name="EMBO Rep.">
        <title>The tumour suppressor CYLD is a negative regulator of RIG-I-mediated antiviral response.</title>
        <authorList>
            <person name="Friedman C.S."/>
            <person name="O'Donnell M.A."/>
            <person name="Legarda-Addison D."/>
            <person name="Ng A."/>
            <person name="Cardenas W.B."/>
            <person name="Yount J.S."/>
            <person name="Moran T.M."/>
            <person name="Basler C.F."/>
            <person name="Komuro A."/>
            <person name="Horvath C.M."/>
            <person name="Xavier R."/>
            <person name="Ting A.T."/>
        </authorList>
    </citation>
    <scope>INTERACTION WITH CYLD</scope>
</reference>
<reference key="23">
    <citation type="journal article" date="2008" name="Mol. Cell">
        <title>Kinase-selective enrichment enables quantitative phosphoproteomics of the kinome across the cell cycle.</title>
        <authorList>
            <person name="Daub H."/>
            <person name="Olsen J.V."/>
            <person name="Bairlein M."/>
            <person name="Gnad F."/>
            <person name="Oppermann F.S."/>
            <person name="Korner R."/>
            <person name="Greff Z."/>
            <person name="Keri G."/>
            <person name="Stemmann O."/>
            <person name="Mann M."/>
        </authorList>
    </citation>
    <scope>IDENTIFICATION BY MASS SPECTROMETRY [LARGE SCALE ANALYSIS]</scope>
    <source>
        <tissue>Cervix carcinoma</tissue>
    </source>
</reference>
<reference key="24">
    <citation type="journal article" date="2009" name="J. Biol. Chem.">
        <title>The tyrosine kinase c-Src enhances RIG-I (retinoic acid-inducible gene I)-elicited antiviral signaling.</title>
        <authorList>
            <person name="Johnsen I.B."/>
            <person name="Nguyen T.T."/>
            <person name="Bergstroem B."/>
            <person name="Fitzgerald K.A."/>
            <person name="Anthonsen M.W."/>
        </authorList>
    </citation>
    <scope>INTERACTION WITH SRC</scope>
</reference>
<reference key="25">
    <citation type="journal article" date="2009" name="J. Virol.">
        <title>Ebola virus protein VP35 impairs the function of interferon regulatory factor-activating kinases IKKepsilon and TBK-1.</title>
        <authorList>
            <person name="Prins K.C."/>
            <person name="Cardenas W.B."/>
            <person name="Basler C.F."/>
        </authorList>
    </citation>
    <scope>INTERACTION WITH EBOLAVIRUS PROTEIN VP35</scope>
    <scope>AUTOPHOSPHORYLATION</scope>
</reference>
<reference key="26">
    <citation type="journal article" date="2009" name="Mol. Cell. Proteomics">
        <title>Large-scale proteomics analysis of the human kinome.</title>
        <authorList>
            <person name="Oppermann F.S."/>
            <person name="Gnad F."/>
            <person name="Olsen J.V."/>
            <person name="Hornberger R."/>
            <person name="Greff Z."/>
            <person name="Keri G."/>
            <person name="Mann M."/>
            <person name="Daub H."/>
        </authorList>
    </citation>
    <scope>IDENTIFICATION BY MASS SPECTROMETRY [LARGE SCALE ANALYSIS]</scope>
</reference>
<reference key="27">
    <citation type="journal article" date="2009" name="Nat. Immunol.">
        <title>The E3 ubiquitin ligase Nrdp1 'preferentially' promotes TLR-mediated production of type I interferon.</title>
        <authorList>
            <person name="Wang C."/>
            <person name="Chen T."/>
            <person name="Zhang J."/>
            <person name="Yang M."/>
            <person name="Li N."/>
            <person name="Xu X."/>
            <person name="Cao X."/>
        </authorList>
    </citation>
    <scope>UBIQUITINATION BY NRDP1</scope>
</reference>
<reference key="28">
    <citation type="journal article" date="2009" name="Proc. Natl. Acad. Sci. U.S.A.">
        <title>ISG56 is a negative-feedback regulator of virus-triggered signaling and cellular antiviral response.</title>
        <authorList>
            <person name="Li Y."/>
            <person name="Li C."/>
            <person name="Xue P."/>
            <person name="Zhong B."/>
            <person name="Mao A.P."/>
            <person name="Ran Y."/>
            <person name="Chen H."/>
            <person name="Wang Y.Y."/>
            <person name="Yang F."/>
            <person name="Shu H.B."/>
        </authorList>
    </citation>
    <scope>INTERACTION WITH STING1</scope>
</reference>
<reference key="29">
    <citation type="journal article" date="2010" name="Cell Res.">
        <title>Tom70 mediates activation of interferon regulatory factor 3 on mitochondria.</title>
        <authorList>
            <person name="Liu X.Y."/>
            <person name="Wei B."/>
            <person name="Shi H.X."/>
            <person name="Shan Y.F."/>
            <person name="Wang C."/>
        </authorList>
    </citation>
    <scope>INTERACTION WITH HSP90AA1</scope>
</reference>
<reference key="30">
    <citation type="journal article" date="2010" name="Immunity">
        <title>Glycogen synthase kinase 3beta regulates IRF3 transcription factor-mediated antiviral response via activation of the kinase TBK1.</title>
        <authorList>
            <person name="Lei C.Q."/>
            <person name="Zhong B."/>
            <person name="Zhang Y."/>
            <person name="Zhang J."/>
            <person name="Wang S."/>
            <person name="Shu H.B."/>
        </authorList>
    </citation>
    <scope>AUTOPHOSPHORYLATION</scope>
    <scope>SUBUNIT</scope>
    <scope>INTERACTION WITH GSK3B</scope>
</reference>
<reference key="31">
    <citation type="journal article" date="2010" name="J. Gen. Virol.">
        <title>Hepatitis B virus polymerase inhibits RIG-I- and Toll-like receptor 3-mediated beta interferon induction in human hepatocytes through interference with interferon regulatory factor 3 activation and dampening of the interaction between TBK1/IKKepsilon and DDX3.</title>
        <authorList>
            <person name="Yu S."/>
            <person name="Chen J."/>
            <person name="Wu M."/>
            <person name="Chen H."/>
            <person name="Kato N."/>
            <person name="Yuan Z."/>
        </authorList>
    </citation>
    <scope>INTERACTION WITH DDX3X</scope>
</reference>
<reference key="32">
    <citation type="journal article" date="2010" name="PLoS Pathog.">
        <title>Optineurin negatively regulates the induction of IFNbeta in response to RNA virus infection.</title>
        <authorList>
            <person name="Mankouri J."/>
            <person name="Fragkoudis R."/>
            <person name="Richards K.H."/>
            <person name="Wetherill L.F."/>
            <person name="Harris M."/>
            <person name="Kohl A."/>
            <person name="Elliott R.M."/>
            <person name="Macdonald A."/>
        </authorList>
    </citation>
    <scope>INTERACTION WITH OPTN AND TRAF3</scope>
</reference>
<reference key="33">
    <citation type="journal article" date="2011" name="BMC Syst. Biol.">
        <title>Initial characterization of the human central proteome.</title>
        <authorList>
            <person name="Burkard T.R."/>
            <person name="Planyavsky M."/>
            <person name="Kaupe I."/>
            <person name="Breitwieser F.P."/>
            <person name="Buerckstuemmer T."/>
            <person name="Bennett K.L."/>
            <person name="Superti-Furga G."/>
            <person name="Colinge J."/>
        </authorList>
    </citation>
    <scope>IDENTIFICATION BY MASS SPECTROMETRY [LARGE SCALE ANALYSIS]</scope>
</reference>
<reference key="34">
    <citation type="journal article" date="2011" name="Hum. Mol. Genet.">
        <title>Copy number variations on chromosome 12q14 in patients with normal tension glaucoma.</title>
        <authorList>
            <person name="Fingert J.H."/>
            <person name="Robin A.L."/>
            <person name="Stone J.L."/>
            <person name="Roos B.R."/>
            <person name="Davis L.K."/>
            <person name="Scheetz T.E."/>
            <person name="Bennett S.R."/>
            <person name="Wassink T.H."/>
            <person name="Kwon Y.H."/>
            <person name="Alward W.L."/>
            <person name="Mullins R.F."/>
            <person name="Sheffield V.C."/>
            <person name="Stone E.M."/>
        </authorList>
    </citation>
    <scope>INVOLVEMENT IN GLC1P</scope>
    <scope>TISSUE SPECIFICITY</scope>
    <scope>VARIANTS PHE-151; ILE-306 AND ALA-464</scope>
</reference>
<reference key="35">
    <citation type="journal article" date="2011" name="Immunity">
        <title>Mapping a dynamic innate immunity protein interaction network regulating type I interferon production.</title>
        <authorList>
            <person name="Li S."/>
            <person name="Wang L."/>
            <person name="Berman M."/>
            <person name="Kong Y.Y."/>
            <person name="Dorf M.E."/>
        </authorList>
    </citation>
    <scope>UBIQUITINATION BY MIB1</scope>
</reference>
<reference key="36">
    <citation type="journal article" date="2011" name="J. Immunol.">
        <title>IFN-induced TPR protein IFIT3 potentiates antiviral signaling by bridging MAVS and TBK1.</title>
        <authorList>
            <person name="Liu X.Y."/>
            <person name="Chen W."/>
            <person name="Wei B."/>
            <person name="Shan Y.F."/>
            <person name="Wang C."/>
        </authorList>
    </citation>
    <scope>SUBCELLULAR LOCATION</scope>
    <scope>INTERACTION WITH IFIT3 AND MAVS</scope>
</reference>
<reference key="37">
    <citation type="journal article" date="2011" name="J. Immunol.">
        <title>TANK-binding kinase 1 attenuates PTAP-dependent retroviral budding through targeting endosomal sorting complex required for transport-I.</title>
        <authorList>
            <person name="Da Q."/>
            <person name="Yang X."/>
            <person name="Xu Y."/>
            <person name="Gao G."/>
            <person name="Cheng G."/>
            <person name="Tang H."/>
        </authorList>
    </citation>
    <scope>FUNCTION IN PHOSPHORYLATION OF VPS37C</scope>
    <scope>CATALYTIC ACTIVITY</scope>
</reference>
<reference key="38">
    <citation type="journal article" date="2011" name="PLoS ONE">
        <title>Functional dissection of the TBK1 molecular network.</title>
        <authorList>
            <person name="Goncalves A."/>
            <person name="Burckstummer T."/>
            <person name="Dixit E."/>
            <person name="Scheicher R."/>
            <person name="Gorna M.W."/>
            <person name="Karayel E."/>
            <person name="Sugar C."/>
            <person name="Stukalov A."/>
            <person name="Berg T."/>
            <person name="Kralovics R."/>
            <person name="Planyavsky M."/>
            <person name="Bennett K.L."/>
            <person name="Colinge J."/>
            <person name="Superti-Furga G."/>
        </authorList>
    </citation>
    <scope>FUNCTION</scope>
    <scope>INTERACTION WITH AZI2; TANK AND TBKBP1</scope>
    <scope>MUTAGENESIS OF ASP-135; MET-690; LEU-693; LYS-694; LEU-704; ASN-708 AND LEU-711</scope>
</reference>
<reference key="39">
    <citation type="journal article" date="2011" name="Proc. Natl. Acad. Sci. U.S.A.">
        <title>IkappaB kinase epsilon and TANK-binding kinase 1 activate AKT by direct phosphorylation.</title>
        <authorList>
            <person name="Xie X."/>
            <person name="Zhang D."/>
            <person name="Zhao B."/>
            <person name="Lu M.K."/>
            <person name="You M."/>
            <person name="Condorelli G."/>
            <person name="Wang C.Y."/>
            <person name="Guan K.L."/>
        </authorList>
    </citation>
    <scope>FUNCTION IN PHOSPHORYLATION OF AKT1</scope>
    <scope>CATALYTIC ACTIVITY</scope>
</reference>
<reference key="40">
    <citation type="journal article" date="2011" name="Science">
        <title>Phosphorylation of the autophagy receptor optineurin restricts Salmonella growth.</title>
        <authorList>
            <person name="Wild P."/>
            <person name="Farhan H."/>
            <person name="McEwan D.G."/>
            <person name="Wagner S."/>
            <person name="Rogov V.V."/>
            <person name="Brady N.R."/>
            <person name="Richter B."/>
            <person name="Korac J."/>
            <person name="Waidmann O."/>
            <person name="Choudhary C."/>
            <person name="Dotsch V."/>
            <person name="Bumann D."/>
            <person name="Dikic I."/>
        </authorList>
    </citation>
    <scope>FUNCTION IN PHOSPHORYLATION OF OPTN</scope>
    <scope>CATALYTIC ACTIVITY</scope>
</reference>
<reference key="41">
    <citation type="journal article" date="2011" name="Oncogene">
        <title>Emerging roles for the non-canonical IKKs in cancer.</title>
        <authorList>
            <person name="Shen R.R."/>
            <person name="Hahn W.C."/>
        </authorList>
    </citation>
    <scope>REVIEW ON FUNCTION</scope>
    <scope>DOMAIN</scope>
</reference>
<reference key="42">
    <citation type="journal article" date="2011" name="Biochem. J.">
        <title>Novel cross-talk within the IKK family controls innate immunity.</title>
        <authorList>
            <person name="Clark K."/>
            <person name="Peggie M."/>
            <person name="Plater L."/>
            <person name="Sorcek R.J."/>
            <person name="Young E.R."/>
            <person name="Madwed J.B."/>
            <person name="Hough J."/>
            <person name="McIver E.G."/>
            <person name="Cohen P."/>
        </authorList>
    </citation>
    <scope>FUNCTION</scope>
    <scope>PHOSPHORYLATION BY IKBKB/IKKB</scope>
</reference>
<reference key="43">
    <citation type="journal article" date="2009" name="J. Biol. Chem.">
        <title>Control of TANK-binding kinase 1-mediated signaling by the gamma(1)34.5 protein of herpes simplex virus 1.</title>
        <authorList>
            <person name="Verpooten D."/>
            <person name="Ma Y."/>
            <person name="Hou S."/>
            <person name="Yan Z."/>
            <person name="He B."/>
        </authorList>
    </citation>
    <scope>INTERACTION WITH HUMAN HERPESVIRUS 1 PROTEIN ICP34.5 (MICROBIAL INFECTION)</scope>
</reference>
<reference key="44">
    <citation type="journal article" date="2012" name="Cell. Signal.">
        <title>PPM1B negatively regulates antiviral response via dephosphorylating TBK1.</title>
        <authorList>
            <person name="Zhao Y."/>
            <person name="Liang L."/>
            <person name="Fan Y."/>
            <person name="Sun S."/>
            <person name="An L."/>
            <person name="Shi Z."/>
            <person name="Cheng J."/>
            <person name="Jia W."/>
            <person name="Sun W."/>
            <person name="Mori-Akiyama Y."/>
            <person name="Zhang H."/>
            <person name="Fu S."/>
            <person name="Yang J."/>
        </authorList>
    </citation>
    <scope>DEPHOSPHORYLATION AT SER-172</scope>
</reference>
<reference key="45">
    <citation type="journal article" date="2012" name="Exp. Eye Res.">
        <title>Confirmation of TBK1 duplication in normal tension glaucoma.</title>
        <authorList>
            <person name="Kawase K."/>
            <person name="Allingham R.R."/>
            <person name="Meguro A."/>
            <person name="Mizuki N."/>
            <person name="Roos B."/>
            <person name="Solivan-Timpe F.M."/>
            <person name="Robin A.L."/>
            <person name="Ritch R."/>
            <person name="Fingert J.H."/>
        </authorList>
    </citation>
    <scope>INVOLVEMENT IN GLC1P</scope>
</reference>
<reference key="46">
    <citation type="journal article" date="2012" name="J. Exp. Med.">
        <title>Heterozygous TBK1 mutations impair TLR3 immunity and underlie herpes simplex encephalitis of childhood.</title>
        <authorList>
            <person name="Herman M."/>
            <person name="Ciancanelli M."/>
            <person name="Ou Y.H."/>
            <person name="Lorenzo L."/>
            <person name="Klaudel-Dreszler M."/>
            <person name="Pauwels E."/>
            <person name="Sancho-Shimizu V."/>
            <person name="Perez de Diego R."/>
            <person name="Abhyankar A."/>
            <person name="Israelsson E."/>
            <person name="Guo Y."/>
            <person name="Cardon A."/>
            <person name="Rozenberg F."/>
            <person name="Lebon P."/>
            <person name="Tardieu M."/>
            <person name="Heropolitanska-Pliszka E."/>
            <person name="Chaussabel D."/>
            <person name="White M.A."/>
            <person name="Abel L."/>
            <person name="Zhang S.Y."/>
            <person name="Casanova J.L."/>
        </authorList>
    </citation>
    <scope>INVOLVEMENT IN IIAE8</scope>
    <scope>VARIANTS IIAE8 ALA-50 AND ALA-159</scope>
    <scope>CHARACTERIZATION OF VARIANTS IIAE8 ALA-50 AND ALA-159</scope>
    <scope>MUTAGENESIS OF LYS-38</scope>
    <scope>PHOSPHORYLATION AT SER-172</scope>
    <scope>FUNCTION</scope>
</reference>
<reference key="47">
    <citation type="journal article" date="2012" name="J. Exp. Med.">
        <title>TRAF-interacting protein (TRIP) negatively regulates IFN-beta production and antiviral response by promoting proteasomal degradation of TANK-binding kinase 1.</title>
        <authorList>
            <person name="Zhang M."/>
            <person name="Wang L."/>
            <person name="Zhao X."/>
            <person name="Zhao K."/>
            <person name="Meng H."/>
            <person name="Zhao W."/>
            <person name="Gao C."/>
        </authorList>
    </citation>
    <scope>UBIQUITINATION BY TRAIP</scope>
</reference>
<reference key="48">
    <citation type="journal article" date="2012" name="Nat. Immunol.">
        <title>NLRP4 negatively regulates type I interferon signaling by targeting the kinase TBK1 for degradation via the ubiquitin ligase DTX4.</title>
        <authorList>
            <person name="Cui J."/>
            <person name="Li Y."/>
            <person name="Zhu L."/>
            <person name="Liu D."/>
            <person name="Songyang Z."/>
            <person name="Wang H.Y."/>
            <person name="Wang R.F."/>
        </authorList>
    </citation>
    <scope>UBIQUITINATION AT LYS-670 BY DTX4</scope>
</reference>
<reference key="49">
    <citation type="journal article" date="2013" name="J. Proteome Res.">
        <title>Toward a comprehensive characterization of a human cancer cell phosphoproteome.</title>
        <authorList>
            <person name="Zhou H."/>
            <person name="Di Palma S."/>
            <person name="Preisinger C."/>
            <person name="Peng M."/>
            <person name="Polat A.N."/>
            <person name="Heck A.J."/>
            <person name="Mohammed S."/>
        </authorList>
    </citation>
    <scope>PHOSPHORYLATION [LARGE SCALE ANALYSIS] AT SER-716</scope>
    <scope>IDENTIFICATION BY MASS SPECTROMETRY [LARGE SCALE ANALYSIS]</scope>
    <source>
        <tissue>Erythroleukemia</tissue>
    </source>
</reference>
<reference key="50">
    <citation type="journal article" date="2014" name="J. Virol.">
        <title>Hijacking of RIG-I signaling proteins into virus-induced cytoplasmic structures correlates with the inhibition of type I interferon responses.</title>
        <authorList>
            <person name="Santiago F.W."/>
            <person name="Covaleda L.M."/>
            <person name="Sanchez-Aparicio M.T."/>
            <person name="Silvas J.A."/>
            <person name="Diaz-Vizarreta A.C."/>
            <person name="Patel J.R."/>
            <person name="Popov V."/>
            <person name="Yu X.J."/>
            <person name="Garcia-Sastre A."/>
            <person name="Aguilar P.V."/>
        </authorList>
    </citation>
    <scope>INTERACTION WITH SFTSV NSS (MICROBIAL INFECTION)</scope>
</reference>
<reference key="51">
    <citation type="journal article" date="2014" name="J. Mol. Cell Biol.">
        <title>Viral suppression of innate immunity via spatial isolation of TBK1/IKKepsilon from mitochondrial antiviral platform.</title>
        <authorList>
            <person name="Ning Y.J."/>
            <person name="Wang M."/>
            <person name="Deng M."/>
            <person name="Shen S."/>
            <person name="Liu W."/>
            <person name="Cao W.C."/>
            <person name="Deng F."/>
            <person name="Wang Y.Y."/>
            <person name="Hu Z."/>
            <person name="Wang H."/>
        </authorList>
    </citation>
    <scope>INTERACTION WITH SFTSV NSS (MICROBIAL INFECTION)</scope>
</reference>
<reference key="52">
    <citation type="journal article" date="2015" name="Acta Neuropathol.">
        <title>Whole-genome sequencing reveals important role for TBK1 and OPTN mutations in frontotemporal lobar degeneration without motor neuron disease.</title>
        <authorList>
            <person name="Pottier C."/>
            <person name="Bieniek K.F."/>
            <person name="Finch N."/>
            <person name="van de Vorst M."/>
            <person name="Baker M."/>
            <person name="Perkersen R."/>
            <person name="Brown P."/>
            <person name="Ravenscroft T."/>
            <person name="van Blitterswijk M."/>
            <person name="Nicholson A.M."/>
            <person name="DeTure M."/>
            <person name="Knopman D.S."/>
            <person name="Josephs K.A."/>
            <person name="Parisi J.E."/>
            <person name="Petersen R.C."/>
            <person name="Boylan K.B."/>
            <person name="Boeve B.F."/>
            <person name="Graff-Radford N.R."/>
            <person name="Veltman J.A."/>
            <person name="Gilissen C."/>
            <person name="Murray M.E."/>
            <person name="Dickson D.W."/>
            <person name="Rademakers R."/>
        </authorList>
    </citation>
    <scope>INVOLVEMENT IN FTDALS4</scope>
    <scope>VARIANTS FTDALS4 ILE-306; GLU-401 AND LYS-696</scope>
</reference>
<reference key="53">
    <citation type="journal article" date="2015" name="EMBO Rep.">
        <title>WDFY1 mediates TLR3/4 signaling by recruiting TRIF.</title>
        <authorList>
            <person name="Hu Y.H."/>
            <person name="Zhang Y."/>
            <person name="Jiang L.Q."/>
            <person name="Wang S."/>
            <person name="Lei C.Q."/>
            <person name="Sun M.S."/>
            <person name="Shu H.B."/>
            <person name="Liu Y."/>
        </authorList>
    </citation>
    <scope>INTERACTION WITH TICAM1</scope>
</reference>
<reference key="54">
    <citation type="journal article" date="2015" name="Genes Immun.">
        <title>Mutations in the TLR3 signaling pathway and beyond in adult patients with herpes simplex encephalitis.</title>
        <authorList>
            <person name="Moerk N."/>
            <person name="Kofod-Olsen E."/>
            <person name="Soerensen K.B."/>
            <person name="Bach E."/>
            <person name="Oerntoft T.F."/>
            <person name="Oestergaard L."/>
            <person name="Paludan S.R."/>
            <person name="Christiansen M."/>
            <person name="Mogensen T.H."/>
        </authorList>
    </citation>
    <scope>INVOLVEMENT IN IIAE8</scope>
    <scope>VARIANT IIAE8 VAL-207</scope>
</reference>
<reference key="55">
    <citation type="journal article" date="2015" name="Nat. Neurosci.">
        <title>Haploinsufficiency of TBK1 causes familial ALS and fronto-temporal dementia.</title>
        <authorList>
            <person name="Freischmidt A."/>
            <person name="Wieland T."/>
            <person name="Richter B."/>
            <person name="Ruf W."/>
            <person name="Schaeffer V."/>
            <person name="Mueller K."/>
            <person name="Marroquin N."/>
            <person name="Nordin F."/>
            <person name="Huebers A."/>
            <person name="Weydt P."/>
            <person name="Pinto S."/>
            <person name="Press R."/>
            <person name="Millecamps S."/>
            <person name="Molko N."/>
            <person name="Bernard E."/>
            <person name="Desnuelle C."/>
            <person name="Soriani M.H."/>
            <person name="Dorst J."/>
            <person name="Graf E."/>
            <person name="Nordstroem U."/>
            <person name="Feiler M.S."/>
            <person name="Putz S."/>
            <person name="Boeckers T.M."/>
            <person name="Meyer T."/>
            <person name="Winkler A.S."/>
            <person name="Winkelman J."/>
            <person name="de Carvalho M."/>
            <person name="Thal D.R."/>
            <person name="Otto M."/>
            <person name="Braennstroem T."/>
            <person name="Volk A.E."/>
            <person name="Kursula P."/>
            <person name="Danzer K.M."/>
            <person name="Lichtner P."/>
            <person name="Dikic I."/>
            <person name="Meitinger T."/>
            <person name="Ludolph A.C."/>
            <person name="Strom T.M."/>
            <person name="Andersen P.M."/>
            <person name="Weishaupt J.H."/>
        </authorList>
    </citation>
    <scope>INVOLVEMENT IN FTDALS4</scope>
    <scope>VARIANTS FTDALS4 HIS-47; CYS-105; THR-305; GLN-308; GLN-357; ARG-559; VAL-571; VAL-598; GLU-643 DEL AND LYS-696</scope>
    <scope>CHARACTERIZATION OF VARIANTS FTDALS4 HIS-47; GLN-308; GLN-357; ARG-559 AND LYS-696</scope>
</reference>
<reference key="56">
    <citation type="journal article" date="2015" name="Science">
        <title>Phosphorylation of innate immune adaptor proteins MAVS, STING, and TRIF induces IRF3 activation.</title>
        <authorList>
            <person name="Liu S."/>
            <person name="Cai X."/>
            <person name="Wu J."/>
            <person name="Cong Q."/>
            <person name="Chen X."/>
            <person name="Li T."/>
            <person name="Du F."/>
            <person name="Ren J."/>
            <person name="Wu Y.T."/>
            <person name="Grishin N.V."/>
            <person name="Chen Z.J."/>
        </authorList>
    </citation>
    <scope>FUNCTION</scope>
    <scope>CATALYTIC ACTIVITY</scope>
</reference>
<reference key="57">
    <citation type="journal article" date="2016" name="Nat. Immunol.">
        <title>A TRAF-like motif of the inducible costimulator ICOS controls development of germinal center TFH cells via the kinase TBK1.</title>
        <authorList>
            <person name="Pedros C."/>
            <person name="Zhang Y."/>
            <person name="Hu J.K."/>
            <person name="Choi Y.S."/>
            <person name="Canonigo-Balancio A.J."/>
            <person name="Yates J.R. III"/>
            <person name="Altman A."/>
            <person name="Crotty S."/>
            <person name="Kong K.F."/>
        </authorList>
    </citation>
    <scope>FUNCTION</scope>
    <scope>INTERACTION WITH ICOS</scope>
</reference>
<reference key="58">
    <citation type="journal article" date="2016" name="Mol. Cell">
        <title>USP38 Inhibits Type I Interferon Signaling by Editing TBK1 Ubiquitination through NLRP4 Signalosome.</title>
        <authorList>
            <person name="Lin M."/>
            <person name="Zhao Z."/>
            <person name="Yang Z."/>
            <person name="Meng Q."/>
            <person name="Tan P."/>
            <person name="Xie W."/>
            <person name="Qin Y."/>
            <person name="Wang R.F."/>
            <person name="Cui J."/>
        </authorList>
    </citation>
    <scope>FUNCTION</scope>
    <scope>SUBCELLULAR LOCATION</scope>
    <scope>UBIQUITINATION AT LYS-670</scope>
    <scope>MUTAGENESIS OF SER-172 AND LYS-670</scope>
</reference>
<reference key="59">
    <citation type="journal article" date="2016" name="EMBO J.">
        <title>Loss of C9ORF72 impairs autophagy and synergizes with polyQ Ataxin-2 to induce motor neuron dysfunction and cell death.</title>
        <authorList>
            <person name="Sellier C."/>
            <person name="Campanari M.L."/>
            <person name="Julie Corbier C."/>
            <person name="Gaucherot A."/>
            <person name="Kolb-Cheynel I."/>
            <person name="Oulad-Abdelghani M."/>
            <person name="Ruffenach F."/>
            <person name="Page A."/>
            <person name="Ciura S."/>
            <person name="Kabashi E."/>
            <person name="Charlet-Berguerand N."/>
        </authorList>
    </citation>
    <scope>FUNCTION</scope>
</reference>
<reference key="60">
    <citation type="journal article" date="2016" name="J. Mol. Cell Biol.">
        <title>Autoubiquitination of TRIM26 links TBK1 to NEMO in RLR-mediated innate antiviral immune response.</title>
        <authorList>
            <person name="Ran Y."/>
            <person name="Zhang J."/>
            <person name="Liu L.L."/>
            <person name="Pan Z.Y."/>
            <person name="Nie Y."/>
            <person name="Zhang H.Y."/>
            <person name="Wang Y.Y."/>
        </authorList>
    </citation>
    <scope>INTERACTION WITH TRIM26</scope>
    <scope>FUNCTION</scope>
</reference>
<reference key="61">
    <citation type="journal article" date="2016" name="Nat. Immunol.">
        <title>E3 ubiquitin ligase RNF128 promotes innate antiviral immunity through K63-linked ubiquitination of TBK1.</title>
        <authorList>
            <person name="Song G."/>
            <person name="Liu B."/>
            <person name="Li Z."/>
            <person name="Wu H."/>
            <person name="Wang P."/>
            <person name="Zhao K."/>
            <person name="Jiang G."/>
            <person name="Zhang L."/>
            <person name="Gao C."/>
        </authorList>
    </citation>
    <scope>UBIQUITINATION BY RNF128</scope>
</reference>
<reference key="62">
    <citation type="journal article" date="2017" name="J. Immunol.">
        <title>TTLL12 Inhibits the Activation of Cellular Antiviral Signaling through Interaction with VISA/MAVS.</title>
        <authorList>
            <person name="Ju L.G."/>
            <person name="Zhu Y."/>
            <person name="Lei P.J."/>
            <person name="Yan D."/>
            <person name="Zhu K."/>
            <person name="Wang X."/>
            <person name="Li Q.L."/>
            <person name="Li X.J."/>
            <person name="Chen J.W."/>
            <person name="Li L.Y."/>
            <person name="Wu M."/>
        </authorList>
    </citation>
    <scope>INTERACTION WITH TTLL12 AND MAVS</scope>
</reference>
<reference key="63">
    <citation type="journal article" date="2017" name="J. Biol. Chem.">
        <title>Heartland virus NSs protein disrupts host defenses by blocking the TBK1 kinase-IRF3 transcription factor interaction and signaling required for interferon induction.</title>
        <authorList>
            <person name="Ning Y.J."/>
            <person name="Feng K."/>
            <person name="Min Y.Q."/>
            <person name="Deng F."/>
            <person name="Hu Z."/>
            <person name="Wang H."/>
        </authorList>
    </citation>
    <scope>INTERACTION WITH HEARTLAND VIRUS NSS (MICROBIAL INFECTION)</scope>
</reference>
<reference key="64">
    <citation type="journal article" date="2017" name="MSphere">
        <title>Differential Antagonism of Human Innate Immune Responses by Tick-Borne Phlebovirus Nonstructural Proteins.</title>
        <authorList>
            <person name="Rezelj V.V."/>
            <person name="Li P."/>
            <person name="Chaudhary V."/>
            <person name="Elliott R.M."/>
            <person name="Jin D.Y."/>
            <person name="Brennan B."/>
        </authorList>
    </citation>
    <scope>INTERACTION WITH HEARTLAND VIRUS NSS (MICROBIAL INFECTION)</scope>
    <scope>INTERACTION WITH SFTSV NSS (MICROBIAL INFECTION)</scope>
    <scope>PHOSPHORYLATION AT SER-172</scope>
</reference>
<reference key="65">
    <citation type="journal article" date="2017" name="Nat. Microbiol.">
        <title>TRIM23 mediates virus-induced autophagy via activation of TBK1.</title>
        <authorList>
            <person name="Sparrer K.M.J."/>
            <person name="Gableske S."/>
            <person name="Zurenski M.A."/>
            <person name="Parker Z.M."/>
            <person name="Full F."/>
            <person name="Baumgart G.J."/>
            <person name="Kato J."/>
            <person name="Pacheco-Rodriguez G."/>
            <person name="Liang C."/>
            <person name="Pornillos O."/>
            <person name="Moss J."/>
            <person name="Vaughan M."/>
            <person name="Gack M.U."/>
        </authorList>
    </citation>
    <scope>INTERACTION WITH TRIM23</scope>
</reference>
<reference key="66">
    <citation type="journal article" date="2017" name="J. Virol.">
        <title>Role of Herpes Simplex Virus 1 gamma34.5 in the Regulation of IRF3 Signaling.</title>
        <authorList>
            <person name="Manivanh R."/>
            <person name="Mehrbach J."/>
            <person name="Knipe D.M."/>
            <person name="Leib D.A."/>
        </authorList>
    </citation>
    <scope>INTERACTION WITH HUMAN HERPESVIRUS 1 PROTEIN ICP34.5 (MICROBIAL INFECTION)</scope>
</reference>
<reference key="67">
    <citation type="journal article" date="2017" name="Cell Discov.">
        <title>Zika virus evades interferon-mediated antiviral response through the co-operation of multiple nonstructural proteins in vitro.</title>
        <authorList>
            <person name="Wu Y."/>
            <person name="Liu Q."/>
            <person name="Zhou J."/>
            <person name="Xie W."/>
            <person name="Chen C."/>
            <person name="Wang Z."/>
            <person name="Yang H."/>
            <person name="Cui J."/>
        </authorList>
    </citation>
    <scope>INTERACTION WITH ZIKA VIRUS NON-STRUCTURAL PROTEIN 1 AND NON-STRUCTURAL PROTEIN 4B (MICROBIAL INFECTION)</scope>
</reference>
<reference key="68">
    <citation type="journal article" date="2018" name="EMBO J.">
        <title>The IKK-related kinase TBK1 activates mTORC1 directly in response to growth factors and innate immune agonists.</title>
        <authorList>
            <person name="Bodur C."/>
            <person name="Kazyken D."/>
            <person name="Huang K."/>
            <person name="Ekim Ustunel B."/>
            <person name="Siroky K.A."/>
            <person name="Tooley A.S."/>
            <person name="Gonzalez I.E."/>
            <person name="Foley D.H."/>
            <person name="Acosta-Jaquez H.A."/>
            <person name="Barnes T.M."/>
            <person name="Steinl G.K."/>
            <person name="Cho K.W."/>
            <person name="Lumeng C.N."/>
            <person name="Riddle S.M."/>
            <person name="Myers M.G. Jr."/>
            <person name="Fingar D.C."/>
        </authorList>
    </citation>
    <scope>FUNCTION</scope>
    <scope>CATALYTIC ACTIVITY</scope>
    <scope>MUTAGENESIS OF LYS-38</scope>
</reference>
<reference key="69">
    <citation type="journal article" date="2018" name="Mol. Biol. Cell">
        <title>Ccdc61 controls centrosomal localization of Cep170 and is required for spindle assembly and symmetry.</title>
        <authorList>
            <person name="Baerenz F."/>
            <person name="Kschonsak Y.T."/>
            <person name="Meyer A."/>
            <person name="Jafarpour A."/>
            <person name="Lorenz H."/>
            <person name="Hoffmann I."/>
        </authorList>
    </citation>
    <scope>INTERACTION WITH CEP170</scope>
</reference>
<reference key="70">
    <citation type="journal article" date="2018" name="Proteomics">
        <title>Quantitative Proteomics Identified TTC4 as a TBK1 Interactor and a Positive Regulator of SeV-Induced Innate Immunity.</title>
        <authorList>
            <person name="Shang J."/>
            <person name="Xia T."/>
            <person name="Han Q.Q."/>
            <person name="Zhao X."/>
            <person name="Hu M.M."/>
            <person name="Shu H.B."/>
            <person name="Guo L."/>
        </authorList>
    </citation>
    <scope>INTERACTION WITH TTC4; IKBKE; AZI2 AND TANK</scope>
    <scope>SUBCELLULAR LOCATION</scope>
</reference>
<reference key="71">
    <citation type="journal article" date="2018" name="J. Virol.">
        <title>Two Conserved Amino Acids within the NSs of Severe Fever with Thrombocytopenia Syndrome Phlebovirus Are Essential for Anti-interferon Activity.</title>
        <authorList>
            <person name="Moriyama M."/>
            <person name="Igarashi M."/>
            <person name="Koshiba T."/>
            <person name="Irie T."/>
            <person name="Takada A."/>
            <person name="Ichinohe T."/>
        </authorList>
    </citation>
    <scope>INTERACTION WITH SFTSV NSS (MICROBIAL INFECTION)</scope>
</reference>
<reference key="72">
    <citation type="journal article" date="2019" name="Science">
        <title>Nuclear hnRNPA2B1 initiates and amplifies the innate immune response to DNA viruses.</title>
        <authorList>
            <person name="Wang L."/>
            <person name="Wen M."/>
            <person name="Cao X."/>
        </authorList>
    </citation>
    <scope>INTERACTION WITH HNRNPA2B1</scope>
</reference>
<reference key="73">
    <citation type="journal article" date="2019" name="Sci. Rep.">
        <title>TBK1 limits mTORC1 by promoting phosphorylation of Raptor Ser877.</title>
        <authorList>
            <person name="Antonia R.J."/>
            <person name="Castillo J."/>
            <person name="Herring L.E."/>
            <person name="Serafin D.S."/>
            <person name="Liu P."/>
            <person name="Graves L.M."/>
            <person name="Baldwin A.S."/>
            <person name="Hagan R.S."/>
        </authorList>
    </citation>
    <scope>FUNCTION</scope>
    <scope>CATALYTIC ACTIVITY</scope>
    <scope>MUTAGENESIS OF LYS-38</scope>
</reference>
<reference key="74">
    <citation type="journal article" date="2019" name="J. Leukoc. Biol.">
        <title>RNF144B inhibits LPS-induced inflammatory responses via binding TBK1.</title>
        <authorList>
            <person name="Zhang Z."/>
            <person name="Zhang L."/>
            <person name="Wang B."/>
            <person name="Zhu X."/>
            <person name="Zhao L."/>
            <person name="Chu C."/>
            <person name="Guo Q."/>
            <person name="Wei R."/>
            <person name="Yin X."/>
            <person name="Zhang Y."/>
            <person name="Li X."/>
        </authorList>
    </citation>
    <scope>INTERACTION WITH RNF144B</scope>
</reference>
<reference key="75">
    <citation type="journal article" date="2020" name="Brain">
        <title>CYLD is a causative gene for frontotemporal dementia - amyotrophic lateral sclerosis.</title>
        <authorList>
            <person name="Dobson-Stone C."/>
            <person name="Hallupp M."/>
            <person name="Shahheydari H."/>
            <person name="Ragagnin A.M.G."/>
            <person name="Chatterton Z."/>
            <person name="Carew-Jones F."/>
            <person name="Shepherd C.E."/>
            <person name="Stefen H."/>
            <person name="Paric E."/>
            <person name="Fath T."/>
            <person name="Thompson E.M."/>
            <person name="Blumbergs P."/>
            <person name="Short C.L."/>
            <person name="Field C.D."/>
            <person name="Panegyres P.K."/>
            <person name="Hecker J."/>
            <person name="Nicholson G."/>
            <person name="Shaw A.D."/>
            <person name="Fullerton J.M."/>
            <person name="Luty A.A."/>
            <person name="Schofield P.R."/>
            <person name="Brooks W.S."/>
            <person name="Rajan N."/>
            <person name="Bennett M.F."/>
            <person name="Bahlo M."/>
            <person name="Landers J.E."/>
            <person name="Piguet O."/>
            <person name="Hodges J.R."/>
            <person name="Halliday G.M."/>
            <person name="Topp S.D."/>
            <person name="Smith B.N."/>
            <person name="Shaw C.E."/>
            <person name="McCann E."/>
            <person name="Fifita J.A."/>
            <person name="Williams K.L."/>
            <person name="Atkin J.D."/>
            <person name="Blair I.P."/>
            <person name="Kwok J.B."/>
        </authorList>
    </citation>
    <scope>INTERACTION WITH CYLD</scope>
</reference>
<reference key="76">
    <citation type="journal article" date="2020" name="Cell Rep.">
        <title>Evasion of Type I Interferon by SARS-CoV-2.</title>
        <authorList>
            <person name="Xia H."/>
            <person name="Cao Z."/>
            <person name="Xie X."/>
            <person name="Zhang X."/>
            <person name="Chen J.Y."/>
            <person name="Wang H."/>
            <person name="Menachery V.D."/>
            <person name="Rajsbaum R."/>
            <person name="Shi P.Y."/>
        </authorList>
    </citation>
    <scope>INTERACTION WITH SARS-COV-2 NON-STRUCTURAL PROTEIN 6 (MICROBIAL INFECTION)</scope>
    <scope>INTERACTION WITH SARS-COV-2 HELICASE (MICROBIAL INFECTION)</scope>
</reference>
<reference key="77">
    <citation type="journal article" date="2020" name="EMBO Rep.">
        <title>TBK1-mediated phosphorylation of LC3C and GABARAP-L2 controls autophagosome shedding by ATG4 protease.</title>
        <authorList>
            <person name="Herhaus L."/>
            <person name="Bhaskara R.M."/>
            <person name="Lystad A.H."/>
            <person name="Gestal-Mato U."/>
            <person name="Covarrubias-Pinto A."/>
            <person name="Bonn F."/>
            <person name="Simonsen A."/>
            <person name="Hummer G."/>
            <person name="Dikic I."/>
        </authorList>
    </citation>
    <scope>FUNCTION</scope>
    <scope>CATALYTIC ACTIVITY</scope>
    <scope>MUTAGENESIS OF LYS-38</scope>
</reference>
<reference key="78">
    <citation type="journal article" date="2020" name="J. Immunol.">
        <title>TRIM14 Is a Key Regulator of the Type I IFN Response during Mycobacterium tuberculosis Infection.</title>
        <authorList>
            <person name="Hoffpauir C.T."/>
            <person name="Bell S.L."/>
            <person name="West K.O."/>
            <person name="Jing T."/>
            <person name="Wagner A.R."/>
            <person name="Torres-Odio S."/>
            <person name="Cox J.S."/>
            <person name="West A.P."/>
            <person name="Li P."/>
            <person name="Patrick K.L."/>
            <person name="Watson R.O."/>
        </authorList>
    </citation>
    <scope>INTERACTION WITH TRIM14</scope>
    <scope>FUNCTION</scope>
</reference>
<reference key="79">
    <citation type="journal article" date="2020" name="EMBO J.">
        <title>Receptor-mediated clustering of FIP200 bypasses the role of LC3 lipidation in autophagy.</title>
        <authorList>
            <person name="Ohnstad A.E."/>
            <person name="Delgado J.M."/>
            <person name="North B.J."/>
            <person name="Nasa I."/>
            <person name="Kettenbach A.N."/>
            <person name="Schultz S.W."/>
            <person name="Shoemaker C.J."/>
        </authorList>
    </citation>
    <scope>INTERACTION WITH TAX1BP1</scope>
</reference>
<reference key="80">
    <citation type="journal article" date="2020" name="Nat. Commun.">
        <title>TRAF3IP3 negatively regulates cytosolic RNA induced anti-viral signaling by promoting TBK1 K48 ubiquitination.</title>
        <authorList>
            <person name="Deng M."/>
            <person name="Tam J.W."/>
            <person name="Wang L."/>
            <person name="Liang K."/>
            <person name="Li S."/>
            <person name="Zhang L."/>
            <person name="Guo H."/>
            <person name="Luo X."/>
            <person name="Zhang Y."/>
            <person name="Petrucelli A."/>
            <person name="Davis B.K."/>
            <person name="Conti B.J."/>
            <person name="June Brickey W."/>
            <person name="Ko C.C."/>
            <person name="Lei Y.L."/>
            <person name="Sun S."/>
            <person name="Ting J.P."/>
        </authorList>
    </citation>
    <scope>INTERACTION WITH TRAF3IP3</scope>
    <scope>UBIQUITINATION</scope>
</reference>
<reference key="81">
    <citation type="journal article" date="2020" name="Sci. Signal.">
        <title>Noncanonical STAT1 phosphorylation expands its transcriptional activity into promoting LPS-induced IL-6 and IL-12p40 production.</title>
        <authorList>
            <person name="Metwally H."/>
            <person name="Tanaka T."/>
            <person name="Li S."/>
            <person name="Parajuli G."/>
            <person name="Kang S."/>
            <person name="Hanieh H."/>
            <person name="Hashimoto S."/>
            <person name="Chalise J.P."/>
            <person name="Gemechu Y."/>
            <person name="Standley D.M."/>
            <person name="Kishimoto T."/>
        </authorList>
    </citation>
    <scope>INTERACTION WITH IKBKB</scope>
</reference>
<reference key="82">
    <citation type="journal article" date="2021" name="Front. Immunol.">
        <title>SARS-CoV-2 Membrane Protein Inhibits Type I Interferon Production Through Ubiquitin-Mediated Degradation of TBK1.</title>
        <authorList>
            <person name="Sui L."/>
            <person name="Zhao Y."/>
            <person name="Wang W."/>
            <person name="Wu P."/>
            <person name="Wang Z."/>
            <person name="Yu Y."/>
            <person name="Hou Z."/>
            <person name="Tan G."/>
            <person name="Liu Q."/>
        </authorList>
    </citation>
    <scope>INTERACTION WITH SARS-COV-2 M PROTEIN (MICROBIAL INFECTION)</scope>
    <scope>FUNCTION</scope>
    <scope>UBIQUITINATION</scope>
</reference>
<reference key="83">
    <citation type="journal article" date="2020" name="Microorganisms">
        <title>The Cytomegalovirus Tegument Protein UL35 Antagonizes Pattern Recognition Receptor-Mediated Type I IFN Transcription.</title>
        <authorList>
            <person name="Fabits M."/>
            <person name="Goncalves Magalhaes V."/>
            <person name="Chan B."/>
            <person name="Girault V."/>
            <person name="Elbasani E."/>
            <person name="Rossetti E."/>
            <person name="Saeland E."/>
            <person name="Messerle M."/>
            <person name="Pichlmair A."/>
            <person name="Lisnic V.J."/>
            <person name="Brinkmann M.M."/>
        </authorList>
    </citation>
    <scope>INTERACTION WITH HUMAN CYTOMEGALOVIRUS PROTEIN UL35 (MICROBIAL INFECTION)</scope>
</reference>
<reference key="84">
    <citation type="journal article" date="2020" name="Mol. Immunol.">
        <title>E3 ubiquitin ligase ASB8 negatively regulates interferon via regulating TBK1/IKKi homeostasis.</title>
        <authorList>
            <person name="Guo Y."/>
            <person name="Li R."/>
            <person name="Tan Z."/>
            <person name="Shi J."/>
            <person name="Fu Y."/>
            <person name="Song Y."/>
            <person name="Zhu M."/>
            <person name="Zhang L."/>
            <person name="Huang J."/>
        </authorList>
    </citation>
    <scope>FUNCTION</scope>
    <scope>INTERACTION WITH ASB8</scope>
    <scope>SUBCELLULAR LOCATION</scope>
</reference>
<reference key="85">
    <citation type="journal article" date="2023" name="Virol. Sin.">
        <title>TRAF7 negatively regulates the RLR signaling pathway by facilitating the K48-linked ubiquitination of TBK1.</title>
        <authorList>
            <person name="Huang J.P."/>
            <person name="Yang Y.X."/>
            <person name="Chen T."/>
            <person name="Wang D.D."/>
            <person name="Li J."/>
            <person name="Xu L.G."/>
        </authorList>
    </citation>
    <scope>UBIQUITINATION BY TRAF7</scope>
</reference>
<reference key="86">
    <citation type="journal article" date="2023" name="PLoS Pathog.">
        <title>Suppression of cGAS- and RIG-I-mediated innate immune signaling by Epstein-Barr virus deubiquitinase BPLF1.</title>
        <authorList>
            <person name="Lui W.Y."/>
            <person name="Bharti A."/>
            <person name="Wong N.M."/>
            <person name="Jangra S."/>
            <person name="Botelho M.G."/>
            <person name="Yuen K.S."/>
            <person name="Jin D.Y."/>
        </authorList>
    </citation>
    <scope>DEUBIQUITINATION BY EPSTEIN-BARR VIRUS PROTEIN BPLF1 (MICROBIAL INFECTION)</scope>
</reference>
<reference key="87">
    <citation type="journal article" date="2013" name="Cell Rep.">
        <title>Crystal structure and mechanism of activation of TANK-binding kinase 1.</title>
        <authorList>
            <person name="Larabi A."/>
            <person name="Devos J.M."/>
            <person name="Ng S.L."/>
            <person name="Nanao M.H."/>
            <person name="Round A."/>
            <person name="Maniatis T."/>
            <person name="Panne D."/>
        </authorList>
    </citation>
    <scope>X-RAY CRYSTALLOGRAPHY (2.40 ANGSTROMS) OF 1-657 IN COMPLEX WITH INHIBITORS</scope>
    <scope>FUNCTION</scope>
    <scope>ACTIVE SITE</scope>
    <scope>HOMODIMER</scope>
    <scope>UBIQUITINATION AT LYS-30 AND LYS-401</scope>
    <scope>MUTAGENESIS OF LYS-30; ASP-33; LYS-38; ASP-135; GLU-355; ARG-357; LYS-401; ARG-547; TYR-577; GLU-580; ILE-582 AND LYS-589</scope>
</reference>
<reference key="88">
    <citation type="journal article" date="2013" name="Cell Rep.">
        <title>Structure and ubiquitination-dependent activation of TANK-binding kinase 1.</title>
        <authorList>
            <person name="Tu D."/>
            <person name="Zhu Z."/>
            <person name="Zhou A.Y."/>
            <person name="Yun C.H."/>
            <person name="Lee K.E."/>
            <person name="Toms A.V."/>
            <person name="Li Y."/>
            <person name="Dunn G.P."/>
            <person name="Chan E."/>
            <person name="Thai T."/>
            <person name="Yang S."/>
            <person name="Ficarro S.B."/>
            <person name="Marto J.A."/>
            <person name="Jeon H."/>
            <person name="Hahn W.C."/>
            <person name="Barbie D.A."/>
            <person name="Eck M.J."/>
        </authorList>
    </citation>
    <scope>X-RAY CRYSTALLOGRAPHY (2.61 ANGSTROMS) OF 1-657 IN COMPLEX WITH INHIBITORS</scope>
    <scope>FUNCTION</scope>
    <scope>ACTIVE SITE</scope>
    <scope>AUTOPHOSPHORYLATION</scope>
    <scope>HOMODIMER</scope>
    <scope>INTERACTION WITH AZI2</scope>
    <scope>MUTAGENESIS OF LYS-38; ASP-135; SER-172; LEU-316; TYR-325; GLU-355; GLU-448; HIS-459; ILE-466 AND PHE-470</scope>
</reference>
<reference key="89">
    <citation type="journal article" date="2013" name="Structure">
        <title>Structural insights into the functions of TBK1 in innate antimicrobial immunity.</title>
        <authorList>
            <person name="Shu C."/>
            <person name="Sankaran B."/>
            <person name="Chaton C.T."/>
            <person name="Herr A.B."/>
            <person name="Mishra A."/>
            <person name="Peng J."/>
            <person name="Li P."/>
        </authorList>
    </citation>
    <scope>X-RAY CRYSTALLOGRAPHY (2.4 ANGSTROMS) OF 1-657 IN COMPLEX WITH INHIBITORS</scope>
    <scope>FUNCTION</scope>
    <scope>PHOSPHORYLATION AT SER-172</scope>
</reference>
<reference key="90">
    <citation type="journal article" date="2019" name="Nature">
        <title>Structural basis of STING binding with and phosphorylation by TBK1.</title>
        <authorList>
            <person name="Zhang C."/>
            <person name="Shang G."/>
            <person name="Gui X."/>
            <person name="Zhang X."/>
            <person name="Bai X.C."/>
            <person name="Chen Z.J."/>
        </authorList>
    </citation>
    <scope>STRUCTURE BY ELECTRON MICROSCOPY (3.3 ANGSTROMS) OF 1-729 OF MUTANT ASN-135 IN COMPLEX WITH STING1</scope>
    <scope>FUNCTION</scope>
    <scope>INTERACTION WITH STING1</scope>
    <scope>ACTIVE SITE</scope>
    <scope>MUTAGENESIS OF TYR-577; ASN-578 AND GLN-581</scope>
</reference>
<reference key="91">
    <citation type="journal article" date="2007" name="Nature">
        <title>Patterns of somatic mutation in human cancer genomes.</title>
        <authorList>
            <person name="Greenman C."/>
            <person name="Stephens P."/>
            <person name="Smith R."/>
            <person name="Dalgliesh G.L."/>
            <person name="Hunter C."/>
            <person name="Bignell G."/>
            <person name="Davies H."/>
            <person name="Teague J."/>
            <person name="Butler A."/>
            <person name="Stevens C."/>
            <person name="Edkins S."/>
            <person name="O'Meara S."/>
            <person name="Vastrik I."/>
            <person name="Schmidt E.E."/>
            <person name="Avis T."/>
            <person name="Barthorpe S."/>
            <person name="Bhamra G."/>
            <person name="Buck G."/>
            <person name="Choudhury B."/>
            <person name="Clements J."/>
            <person name="Cole J."/>
            <person name="Dicks E."/>
            <person name="Forbes S."/>
            <person name="Gray K."/>
            <person name="Halliday K."/>
            <person name="Harrison R."/>
            <person name="Hills K."/>
            <person name="Hinton J."/>
            <person name="Jenkinson A."/>
            <person name="Jones D."/>
            <person name="Menzies A."/>
            <person name="Mironenko T."/>
            <person name="Perry J."/>
            <person name="Raine K."/>
            <person name="Richardson D."/>
            <person name="Shepherd R."/>
            <person name="Small A."/>
            <person name="Tofts C."/>
            <person name="Varian J."/>
            <person name="Webb T."/>
            <person name="West S."/>
            <person name="Widaa S."/>
            <person name="Yates A."/>
            <person name="Cahill D.P."/>
            <person name="Louis D.N."/>
            <person name="Goldstraw P."/>
            <person name="Nicholson A.G."/>
            <person name="Brasseur F."/>
            <person name="Looijenga L."/>
            <person name="Weber B.L."/>
            <person name="Chiew Y.-E."/>
            <person name="DeFazio A."/>
            <person name="Greaves M.F."/>
            <person name="Green A.R."/>
            <person name="Campbell P."/>
            <person name="Birney E."/>
            <person name="Easton D.F."/>
            <person name="Chenevix-Trench G."/>
            <person name="Tan M.-H."/>
            <person name="Khoo S.K."/>
            <person name="Teh B.T."/>
            <person name="Yuen S.T."/>
            <person name="Leung S.Y."/>
            <person name="Wooster R."/>
            <person name="Futreal P.A."/>
            <person name="Stratton M.R."/>
        </authorList>
    </citation>
    <scope>VARIANTS [LARGE SCALE ANALYSIS] GLN-271; GLU-291; HIS-296; ARG-410 AND ALA-464</scope>
</reference>
<reference key="92">
    <citation type="journal article" date="2020" name="Science">
        <title>Inborn errors of type I IFN immunity in patients with life-threatening COVID-19.</title>
        <authorList>
            <consortium name="COVID-STORM Clinicians"/>
            <consortium name="COVID Clinicians"/>
            <consortium name="Imagine COVID Group"/>
            <consortium name="French COVID Cohort Study Group"/>
            <consortium name="CoV-Contact Cohort"/>
            <consortium name="Amsterdam UMC Covid-19 Biobank"/>
            <consortium name="COVID Human Genetic Effort"/>
            <consortium name="NIAID-USUHS/TAGC COVID Immunity Group"/>
            <person name="Zhang Q."/>
            <person name="Bastard P."/>
            <person name="Liu Z."/>
            <person name="Le Pen J."/>
            <person name="Moncada-Velez M."/>
            <person name="Chen J."/>
            <person name="Ogishi M."/>
            <person name="Sabli I.K.D."/>
            <person name="Hodeib S."/>
            <person name="Korol C."/>
            <person name="Rosain J."/>
            <person name="Bilguvar K."/>
            <person name="Ye J."/>
            <person name="Bolze A."/>
            <person name="Bigio B."/>
            <person name="Yang R."/>
            <person name="Arias A.A."/>
            <person name="Zhou Q."/>
            <person name="Zhang Y."/>
            <person name="Onodi F."/>
            <person name="Korniotis S."/>
            <person name="Karpf L."/>
            <person name="Philippot Q."/>
            <person name="Chbihi M."/>
            <person name="Bonnet-Madin L."/>
            <person name="Dorgham K."/>
            <person name="Smith N."/>
            <person name="Schneider W.M."/>
            <person name="Razooky B.S."/>
            <person name="Hoffmann H.H."/>
            <person name="Michailidis E."/>
            <person name="Moens L."/>
            <person name="Han J.E."/>
            <person name="Lorenzo L."/>
            <person name="Bizien L."/>
            <person name="Meade P."/>
            <person name="Neehus A.L."/>
            <person name="Ugurbil A.C."/>
            <person name="Corneau A."/>
            <person name="Kerner G."/>
            <person name="Zhang P."/>
            <person name="Rapaport F."/>
            <person name="Seeleuthner Y."/>
            <person name="Manry J."/>
            <person name="Masson C."/>
            <person name="Schmitt Y."/>
            <person name="Schlueter A."/>
            <person name="Le Voyer T."/>
            <person name="Khan T."/>
            <person name="Li J."/>
            <person name="Fellay J."/>
            <person name="Roussel L."/>
            <person name="Shahrooei M."/>
            <person name="Alosaimi M.F."/>
            <person name="Mansouri D."/>
            <person name="Al-Saud H."/>
            <person name="Al-Mulla F."/>
            <person name="Almourfi F."/>
            <person name="Al-Muhsen S.Z."/>
            <person name="Alsohime F."/>
            <person name="Al Turki S."/>
            <person name="Hasanato R."/>
            <person name="van de Beek D."/>
            <person name="Biondi A."/>
            <person name="Bettini L.R."/>
            <person name="D'Angio' M."/>
            <person name="Bonfanti P."/>
            <person name="Imberti L."/>
            <person name="Sottini A."/>
            <person name="Paghera S."/>
            <person name="Quiros-Roldan E."/>
            <person name="Rossi C."/>
            <person name="Oler A.J."/>
            <person name="Tompkins M.F."/>
            <person name="Alba C."/>
            <person name="Vandernoot I."/>
            <person name="Goffard J.C."/>
            <person name="Smits G."/>
            <person name="Migeotte I."/>
            <person name="Haerynck F."/>
            <person name="Soler-Palacin P."/>
            <person name="Martin-Nalda A."/>
            <person name="Colobran R."/>
            <person name="Morange P.E."/>
            <person name="Keles S."/>
            <person name="Coelkesen F."/>
            <person name="Ozcelik T."/>
            <person name="Yasar K.K."/>
            <person name="Senoglu S."/>
            <person name="Karabela S.N."/>
            <person name="Rodriguez-Gallego C."/>
            <person name="Novelli G."/>
            <person name="Hraiech S."/>
            <person name="Tandjaoui-Lambiotte Y."/>
            <person name="Duval X."/>
            <person name="Laouenan C."/>
            <person name="Snow A.L."/>
            <person name="Dalgard C.L."/>
            <person name="Milner J.D."/>
            <person name="Vinh D.C."/>
            <person name="Mogensen T.H."/>
            <person name="Marr N."/>
            <person name="Spaan A.N."/>
            <person name="Boisson B."/>
            <person name="Boisson-Dupuis S."/>
            <person name="Bustamante J."/>
            <person name="Puel A."/>
            <person name="Ciancanelli M.J."/>
            <person name="Meyts I."/>
            <person name="Maniatis T."/>
            <person name="Soumelis V."/>
            <person name="Amara A."/>
            <person name="Nussenzweig M."/>
            <person name="Garcia-Sastre A."/>
            <person name="Krammer F."/>
            <person name="Pujol A."/>
            <person name="Duffy D."/>
            <person name="Lifton R.P."/>
            <person name="Zhang S.Y."/>
            <person name="Gorochov G."/>
            <person name="Beziat V."/>
            <person name="Jouanguy E."/>
            <person name="Sancho-Shimizu V."/>
            <person name="Rice C.M."/>
            <person name="Abel L."/>
            <person name="Notarangelo L.D."/>
            <person name="Cobat A."/>
            <person name="Su H.C."/>
            <person name="Casanova J.L."/>
        </authorList>
    </citation>
    <scope>VARIANTS SER-24; LEU-152; ALA-159; 308-ARG--LEU-729 DEL; GLN-384; SER-388; THR-397; ILE-508; MET-522; THR-533; GLN-653 AND SER-659</scope>
    <scope>CHARACTERIZATION OF VARIANTS SER-24; LEU-152; ALA-159; 308-ARG--LEU-729 DEL; GLN-384; SER-388; THR-397; ILE-508; MET-522; THR-533; GLN-653 AND SER-659</scope>
    <scope>FUNCTION</scope>
</reference>
<reference key="93">
    <citation type="journal article" date="2021" name="Cell">
        <title>Human TBK1 deficiency leads to autoinflammation driven by TNF-induced cell death.</title>
        <authorList>
            <person name="Taft J."/>
            <person name="Markson M."/>
            <person name="Legarda D."/>
            <person name="Patel R."/>
            <person name="Chan M."/>
            <person name="Malle L."/>
            <person name="Richardson A."/>
            <person name="Gruber C."/>
            <person name="Martin-Fernandez M."/>
            <person name="Mancini G.M.S."/>
            <person name="van Laar J.A.M."/>
            <person name="van Pelt P."/>
            <person name="Buta S."/>
            <person name="Wokke B.H.A."/>
            <person name="Sabli I.K.D."/>
            <person name="Sancho-Shimizu V."/>
            <person name="Chavan P.P."/>
            <person name="Schnappauf O."/>
            <person name="Khubchandani R."/>
            <person name="Cueceoglu M.K."/>
            <person name="Oezen S."/>
            <person name="Kastner D.L."/>
            <person name="Ting A.T."/>
            <person name="Aksentijevich I."/>
            <person name="Hollink I.H.I.M."/>
            <person name="Bogunovic D."/>
        </authorList>
    </citation>
    <scope>VARIANTS AIARV ASP-212; 440-ARG--LEU-729 DEL AND 619-TRP--LEU-729 DEL</scope>
    <scope>CHARACTERIZATION OF VARIANTS AIARV ASP-212 AND 619-TRP--LEU-729 DEL</scope>
    <scope>INVOLVEMENT IN AIARV</scope>
    <scope>FUNCTION</scope>
</reference>
<reference key="94">
    <citation type="journal article" date="2021" name="Rheumatology">
        <title>Whole exome sequencing in unclassified autoinflammatory diseases: more monogenic diseases in the pipeline?</title>
        <authorList>
            <person name="Kosukcu C."/>
            <person name="Taskiran E.Z."/>
            <person name="Batu E.D."/>
            <person name="Sag E."/>
            <person name="Bilginer Y."/>
            <person name="Alikasifoglu M."/>
            <person name="Ozen S."/>
        </authorList>
    </citation>
    <scope>VARIANT AIARV 440-ARG--LEU-729 DEL</scope>
</reference>
<reference key="95">
    <citation type="journal article" date="2023" name="J. Biol. Chem.">
        <title>TBK1-stabilized ZNF268a recruits SETD4 to methylate TBK1 for efficient interferon signaling.</title>
        <authorList>
            <person name="Liu Y."/>
            <person name="Yin W."/>
            <person name="Zeng X."/>
            <person name="Fan J."/>
            <person name="Liu C."/>
            <person name="Gao M."/>
            <person name="Huang Z."/>
            <person name="Sun G."/>
            <person name="Guo M."/>
        </authorList>
    </citation>
    <scope>FUNCTION</scope>
    <scope>HOMODIMERIZATION</scope>
    <scope>INTERACTION WITH IRF3; MAVS AND ZNF268</scope>
    <scope>METHYLATION AT LYS-607</scope>
    <scope>MUTAGENESIS OF LYS-584 AND LYS-607</scope>
</reference>